<organism>
    <name type="scientific">Homo sapiens</name>
    <name type="common">Human</name>
    <dbReference type="NCBI Taxonomy" id="9606"/>
    <lineage>
        <taxon>Eukaryota</taxon>
        <taxon>Metazoa</taxon>
        <taxon>Chordata</taxon>
        <taxon>Craniata</taxon>
        <taxon>Vertebrata</taxon>
        <taxon>Euteleostomi</taxon>
        <taxon>Mammalia</taxon>
        <taxon>Eutheria</taxon>
        <taxon>Euarchontoglires</taxon>
        <taxon>Primates</taxon>
        <taxon>Haplorrhini</taxon>
        <taxon>Catarrhini</taxon>
        <taxon>Hominidae</taxon>
        <taxon>Homo</taxon>
    </lineage>
</organism>
<keyword id="KW-0002">3D-structure</keyword>
<keyword id="KW-0007">Acetylation</keyword>
<keyword id="KW-0948">Aicardi-Goutieres syndrome</keyword>
<keyword id="KW-0021">Allosteric enzyme</keyword>
<keyword id="KW-0025">Alternative splicing</keyword>
<keyword id="KW-0051">Antiviral defense</keyword>
<keyword id="KW-0158">Chromosome</keyword>
<keyword id="KW-0903">Direct protein sequencing</keyword>
<keyword id="KW-0225">Disease variant</keyword>
<keyword id="KW-0227">DNA damage</keyword>
<keyword id="KW-0234">DNA repair</keyword>
<keyword id="KW-0235">DNA replication</keyword>
<keyword id="KW-0342">GTP-binding</keyword>
<keyword id="KW-0945">Host-virus interaction</keyword>
<keyword id="KW-0378">Hydrolase</keyword>
<keyword id="KW-0391">Immunity</keyword>
<keyword id="KW-0399">Innate immunity</keyword>
<keyword id="KW-1017">Isopeptide bond</keyword>
<keyword id="KW-0479">Metal-binding</keyword>
<keyword id="KW-0547">Nucleotide-binding</keyword>
<keyword id="KW-0539">Nucleus</keyword>
<keyword id="KW-0597">Phosphoprotein</keyword>
<keyword id="KW-1267">Proteomics identification</keyword>
<keyword id="KW-1185">Reference proteome</keyword>
<keyword id="KW-0832">Ubl conjugation</keyword>
<keyword id="KW-0862">Zinc</keyword>
<sequence length="626" mass="72201">MQRADSEQPSKRPRCDDSPRTPSNTPSAEADWSPGLELHPDYKTWGPEQVCSFLRRGGFEEPVLLKNIRENEITGALLPCLDESRFENLGVSSLGERKKLLSYIQRLVQIHVDTMKVINDPIHGHIELHPLLVRIIDTPQFQRLRYIKQLGGGYYVFPGASHNRFEHSLGVGYLAGCLVHALGEKQPELQISERDVLCVQIAGLCHDLGHGPFSHMFDGRFIPLARPEVKWTHEQGSVMMFEHLINSNGIKPVMEQYGLIPEEDICFIKEQIVGPLESPVEDSLWPYKGRPENKSFLYEIVSNKRNGIDVDKWDYFARDCHHLGIQNNFDYKRFIKFARVCEVDNELRICARDKEVGNLYDMFHTRNSLHRRAYQHKVGNIIDTMITDAFLKADDYIEITGAGGKKYRISTAIDDMEAYTKLTDNIFLEILYSTDPKLKDAREILKQIEYRNLFKYVGETQPTGQIKIKREDYESLPKEVASAKPKVLLDVKLKAEDFIVDVINMDYGMQEKNPIDHVSFYCKTAPNRAIRITKNQVSQLLPEKFAEQLIRVYCKKVDRKSLYAARQYFVQWCADRNFTKPQDGDVIAPLITPQKKEWNDSTSVQNPTRLREASKSRVQLFKDDPM</sequence>
<evidence type="ECO:0000250" key="1">
    <source>
        <dbReference type="UniProtKB" id="Q60710"/>
    </source>
</evidence>
<evidence type="ECO:0000255" key="2">
    <source>
        <dbReference type="PROSITE-ProRule" id="PRU00184"/>
    </source>
</evidence>
<evidence type="ECO:0000255" key="3">
    <source>
        <dbReference type="PROSITE-ProRule" id="PRU01175"/>
    </source>
</evidence>
<evidence type="ECO:0000256" key="4">
    <source>
        <dbReference type="SAM" id="MobiDB-lite"/>
    </source>
</evidence>
<evidence type="ECO:0000269" key="5">
    <source>
    </source>
</evidence>
<evidence type="ECO:0000269" key="6">
    <source>
    </source>
</evidence>
<evidence type="ECO:0000269" key="7">
    <source>
    </source>
</evidence>
<evidence type="ECO:0000269" key="8">
    <source>
    </source>
</evidence>
<evidence type="ECO:0000269" key="9">
    <source>
    </source>
</evidence>
<evidence type="ECO:0000269" key="10">
    <source>
    </source>
</evidence>
<evidence type="ECO:0000269" key="11">
    <source>
    </source>
</evidence>
<evidence type="ECO:0000269" key="12">
    <source>
    </source>
</evidence>
<evidence type="ECO:0000269" key="13">
    <source>
    </source>
</evidence>
<evidence type="ECO:0000269" key="14">
    <source>
    </source>
</evidence>
<evidence type="ECO:0000269" key="15">
    <source>
    </source>
</evidence>
<evidence type="ECO:0000269" key="16">
    <source>
    </source>
</evidence>
<evidence type="ECO:0000269" key="17">
    <source>
    </source>
</evidence>
<evidence type="ECO:0000269" key="18">
    <source>
    </source>
</evidence>
<evidence type="ECO:0000269" key="19">
    <source>
    </source>
</evidence>
<evidence type="ECO:0000269" key="20">
    <source>
    </source>
</evidence>
<evidence type="ECO:0000269" key="21">
    <source>
    </source>
</evidence>
<evidence type="ECO:0000269" key="22">
    <source>
    </source>
</evidence>
<evidence type="ECO:0000269" key="23">
    <source>
    </source>
</evidence>
<evidence type="ECO:0000269" key="24">
    <source>
    </source>
</evidence>
<evidence type="ECO:0000269" key="25">
    <source>
    </source>
</evidence>
<evidence type="ECO:0000269" key="26">
    <source>
    </source>
</evidence>
<evidence type="ECO:0000269" key="27">
    <source>
    </source>
</evidence>
<evidence type="ECO:0000269" key="28">
    <source>
    </source>
</evidence>
<evidence type="ECO:0000269" key="29">
    <source>
    </source>
</evidence>
<evidence type="ECO:0000269" key="30">
    <source>
    </source>
</evidence>
<evidence type="ECO:0000269" key="31">
    <source>
    </source>
</evidence>
<evidence type="ECO:0000269" key="32">
    <source>
    </source>
</evidence>
<evidence type="ECO:0000269" key="33">
    <source>
    </source>
</evidence>
<evidence type="ECO:0000269" key="34">
    <source>
    </source>
</evidence>
<evidence type="ECO:0000269" key="35">
    <source>
    </source>
</evidence>
<evidence type="ECO:0000269" key="36">
    <source>
    </source>
</evidence>
<evidence type="ECO:0000269" key="37">
    <source>
    </source>
</evidence>
<evidence type="ECO:0000269" key="38">
    <source>
    </source>
</evidence>
<evidence type="ECO:0000269" key="39">
    <source>
    </source>
</evidence>
<evidence type="ECO:0000269" key="40">
    <source>
    </source>
</evidence>
<evidence type="ECO:0000269" key="41">
    <source>
    </source>
</evidence>
<evidence type="ECO:0000269" key="42">
    <source ref="8"/>
</evidence>
<evidence type="ECO:0000303" key="43">
    <source>
    </source>
</evidence>
<evidence type="ECO:0000303" key="44">
    <source>
    </source>
</evidence>
<evidence type="ECO:0000303" key="45">
    <source ref="2"/>
</evidence>
<evidence type="ECO:0000305" key="46"/>
<evidence type="ECO:0000305" key="47">
    <source>
    </source>
</evidence>
<evidence type="ECO:0000305" key="48">
    <source>
    </source>
</evidence>
<evidence type="ECO:0000312" key="49">
    <source>
        <dbReference type="HGNC" id="HGNC:15925"/>
    </source>
</evidence>
<evidence type="ECO:0007744" key="50">
    <source>
        <dbReference type="PDB" id="2E8O"/>
    </source>
</evidence>
<evidence type="ECO:0007744" key="51">
    <source>
        <dbReference type="PDB" id="3U1N"/>
    </source>
</evidence>
<evidence type="ECO:0007744" key="52">
    <source>
        <dbReference type="PDB" id="4BZB"/>
    </source>
</evidence>
<evidence type="ECO:0007744" key="53">
    <source>
        <dbReference type="PDB" id="4BZC"/>
    </source>
</evidence>
<evidence type="ECO:0007744" key="54">
    <source>
        <dbReference type="PDB" id="4CC9"/>
    </source>
</evidence>
<evidence type="ECO:0007744" key="55">
    <source>
        <dbReference type="PDB" id="4MZ7"/>
    </source>
</evidence>
<evidence type="ECO:0007744" key="56">
    <source>
        <dbReference type="PDB" id="4QFX"/>
    </source>
</evidence>
<evidence type="ECO:0007744" key="57">
    <source>
        <dbReference type="PDB" id="4QFY"/>
    </source>
</evidence>
<evidence type="ECO:0007744" key="58">
    <source>
        <dbReference type="PDB" id="4QFZ"/>
    </source>
</evidence>
<evidence type="ECO:0007744" key="59">
    <source>
        <dbReference type="PDB" id="4QG0"/>
    </source>
</evidence>
<evidence type="ECO:0007744" key="60">
    <source>
        <dbReference type="PDB" id="4QG1"/>
    </source>
</evidence>
<evidence type="ECO:0007744" key="61">
    <source>
        <dbReference type="PDB" id="4QG2"/>
    </source>
</evidence>
<evidence type="ECO:0007744" key="62">
    <source>
        <dbReference type="PDB" id="4QG4"/>
    </source>
</evidence>
<evidence type="ECO:0007744" key="63">
    <source>
        <dbReference type="PDB" id="4RXO"/>
    </source>
</evidence>
<evidence type="ECO:0007744" key="64">
    <source>
        <dbReference type="PDB" id="4RXP"/>
    </source>
</evidence>
<evidence type="ECO:0007744" key="65">
    <source>
        <dbReference type="PDB" id="4RXQ"/>
    </source>
</evidence>
<evidence type="ECO:0007744" key="66">
    <source>
        <dbReference type="PDB" id="4RXR"/>
    </source>
</evidence>
<evidence type="ECO:0007744" key="67">
    <source>
        <dbReference type="PDB" id="4RXS"/>
    </source>
</evidence>
<evidence type="ECO:0007744" key="68">
    <source>
        <dbReference type="PDB" id="4TNP"/>
    </source>
</evidence>
<evidence type="ECO:0007744" key="69">
    <source>
        <dbReference type="PDB" id="4TNQ"/>
    </source>
</evidence>
<evidence type="ECO:0007744" key="70">
    <source>
        <dbReference type="PDB" id="4TNR"/>
    </source>
</evidence>
<evidence type="ECO:0007744" key="71">
    <source>
        <dbReference type="PDB" id="4TNX"/>
    </source>
</evidence>
<evidence type="ECO:0007744" key="72">
    <source>
        <dbReference type="PDB" id="4ZWE"/>
    </source>
</evidence>
<evidence type="ECO:0007744" key="73">
    <source>
        <dbReference type="PDB" id="4ZWG"/>
    </source>
</evidence>
<evidence type="ECO:0007744" key="74">
    <source>
        <dbReference type="PDB" id="5AO0"/>
    </source>
</evidence>
<evidence type="ECO:0007744" key="75">
    <source>
        <dbReference type="PDB" id="5AO1"/>
    </source>
</evidence>
<evidence type="ECO:0007744" key="76">
    <source>
        <dbReference type="PDB" id="5AO2"/>
    </source>
</evidence>
<evidence type="ECO:0007744" key="77">
    <source>
        <dbReference type="PDB" id="5AO3"/>
    </source>
</evidence>
<evidence type="ECO:0007744" key="78">
    <source>
        <dbReference type="PDB" id="5AO4"/>
    </source>
</evidence>
<evidence type="ECO:0007744" key="79">
    <source>
    </source>
</evidence>
<evidence type="ECO:0007744" key="80">
    <source>
    </source>
</evidence>
<evidence type="ECO:0007744" key="81">
    <source>
    </source>
</evidence>
<evidence type="ECO:0007744" key="82">
    <source>
    </source>
</evidence>
<evidence type="ECO:0007744" key="83">
    <source>
    </source>
</evidence>
<evidence type="ECO:0007744" key="84">
    <source>
    </source>
</evidence>
<evidence type="ECO:0007744" key="85">
    <source>
    </source>
</evidence>
<evidence type="ECO:0007744" key="86">
    <source>
    </source>
</evidence>
<evidence type="ECO:0007829" key="87">
    <source>
        <dbReference type="PDB" id="2E8O"/>
    </source>
</evidence>
<evidence type="ECO:0007829" key="88">
    <source>
        <dbReference type="PDB" id="4CC9"/>
    </source>
</evidence>
<evidence type="ECO:0007829" key="89">
    <source>
        <dbReference type="PDB" id="4QFY"/>
    </source>
</evidence>
<evidence type="ECO:0007829" key="90">
    <source>
        <dbReference type="PDB" id="6CM2"/>
    </source>
</evidence>
<evidence type="ECO:0007829" key="91">
    <source>
        <dbReference type="PDB" id="6DWD"/>
    </source>
</evidence>
<evidence type="ECO:0007829" key="92">
    <source>
        <dbReference type="PDB" id="7A5Y"/>
    </source>
</evidence>
<evidence type="ECO:0007829" key="93">
    <source>
        <dbReference type="PDB" id="7UJN"/>
    </source>
</evidence>
<evidence type="ECO:0007829" key="94">
    <source>
        <dbReference type="PDB" id="8QXO"/>
    </source>
</evidence>
<comment type="function">
    <text evidence="1 8 12 13 14 17 18 19 20 21 24 25 26 30 31 32 33 34 35 38 39">Protein that acts both as a host restriction factor involved in defense response to virus and as a regulator of DNA end resection at stalled replication forks (PubMed:19525956, PubMed:21613998, PubMed:21720370, PubMed:22056990, PubMed:23601106, PubMed:23602554, PubMed:24336198, PubMed:26294762, PubMed:26431200, PubMed:28229507, PubMed:28834754, PubMed:29670289). Has deoxynucleoside triphosphate (dNTPase) activity, which is required to restrict infection by viruses, such as HIV-1: dNTPase activity reduces cellular dNTP levels to levels too low for retroviral reverse transcription to occur, blocking early-stage virus replication in dendritic and other myeloid cells (PubMed:19525956, PubMed:21613998, PubMed:21720370, PubMed:22056990, PubMed:23364794, PubMed:23601106, PubMed:23602554, PubMed:24336198, PubMed:25038827, PubMed:26101257, PubMed:26294762, PubMed:26431200, PubMed:28229507). Likewise, suppresses LINE-1 retrotransposon activity (PubMed:24035396, PubMed:24217394, PubMed:29610582). Not able to restrict infection by HIV-2 virus; because restriction activity is counteracted by HIV-2 viral protein Vpx (PubMed:21613998, PubMed:21720370). In addition to virus restriction, dNTPase activity acts as a regulator of DNA precursor pools by regulating dNTP pools (PubMed:23858451). Phosphorylation at Thr-592 acts as a switch to control dNTPase-dependent and -independent functions: it inhibits dNTPase activity and ability to restrict infection by viruses, while it promotes DNA end resection at stalled replication forks (PubMed:23601106, PubMed:23602554, PubMed:29610582, PubMed:29670289). Functions during S phase at stalled DNA replication forks to promote the resection of gapped or reversed forks: acts by stimulating the exonuclease activity of MRE11, activating the ATR-CHK1 pathway and allowing the forks to restart replication (PubMed:29670289). Its ability to promote degradation of nascent DNA at stalled replication forks is required to prevent induction of type I interferons, thereby preventing chronic inflammation (PubMed:27477283, PubMed:29670289). Ability to promote DNA end resection at stalled replication forks is independent of dNTPase activity (PubMed:29670289). Enhances immunoglobulin hypermutation in B-lymphocytes by promoting transversion mutation (By similarity).</text>
</comment>
<comment type="catalytic activity">
    <reaction evidence="14 15 18 24 30 31 32 37 38 39 40">
        <text>a 2'-deoxyribonucleoside 5'-triphosphate + H2O = a 2'-deoxyribonucleoside + triphosphate + H(+)</text>
        <dbReference type="Rhea" id="RHEA:46148"/>
        <dbReference type="ChEBI" id="CHEBI:15377"/>
        <dbReference type="ChEBI" id="CHEBI:15378"/>
        <dbReference type="ChEBI" id="CHEBI:18036"/>
        <dbReference type="ChEBI" id="CHEBI:18274"/>
        <dbReference type="ChEBI" id="CHEBI:61560"/>
    </reaction>
    <physiologicalReaction direction="left-to-right" evidence="15 18">
        <dbReference type="Rhea" id="RHEA:46149"/>
    </physiologicalReaction>
</comment>
<comment type="catalytic activity">
    <reaction evidence="14 15 18 22 24 31 32 37 38 39 40">
        <text>dATP + H2O = 2'-deoxyadenosine + triphosphate + H(+)</text>
        <dbReference type="Rhea" id="RHEA:67648"/>
        <dbReference type="ChEBI" id="CHEBI:15377"/>
        <dbReference type="ChEBI" id="CHEBI:15378"/>
        <dbReference type="ChEBI" id="CHEBI:17256"/>
        <dbReference type="ChEBI" id="CHEBI:18036"/>
        <dbReference type="ChEBI" id="CHEBI:61404"/>
    </reaction>
    <physiologicalReaction direction="left-to-right" evidence="15 18">
        <dbReference type="Rhea" id="RHEA:67649"/>
    </physiologicalReaction>
</comment>
<comment type="catalytic activity">
    <reaction evidence="14 15 24 31 32 37 40">
        <text>dCTP + H2O = 2'-deoxycytidine + triphosphate + H(+)</text>
        <dbReference type="Rhea" id="RHEA:80083"/>
        <dbReference type="ChEBI" id="CHEBI:15377"/>
        <dbReference type="ChEBI" id="CHEBI:15378"/>
        <dbReference type="ChEBI" id="CHEBI:15698"/>
        <dbReference type="ChEBI" id="CHEBI:18036"/>
        <dbReference type="ChEBI" id="CHEBI:61481"/>
    </reaction>
    <physiologicalReaction direction="left-to-right" evidence="15">
        <dbReference type="Rhea" id="RHEA:80084"/>
    </physiologicalReaction>
</comment>
<comment type="catalytic activity">
    <reaction evidence="14 15 18 24 31 32 37 39 40">
        <text>dGTP + H2O = 2'-deoxyguanosine + triphosphate + H(+)</text>
        <dbReference type="Rhea" id="RHEA:15193"/>
        <dbReference type="ChEBI" id="CHEBI:15377"/>
        <dbReference type="ChEBI" id="CHEBI:15378"/>
        <dbReference type="ChEBI" id="CHEBI:17172"/>
        <dbReference type="ChEBI" id="CHEBI:18036"/>
        <dbReference type="ChEBI" id="CHEBI:61429"/>
    </reaction>
    <physiologicalReaction direction="left-to-right" evidence="15 18">
        <dbReference type="Rhea" id="RHEA:15194"/>
    </physiologicalReaction>
</comment>
<comment type="catalytic activity">
    <reaction evidence="14 15 18 24 31 32 37 40">
        <text>dTTP + H2O = thymidine + triphosphate + H(+)</text>
        <dbReference type="Rhea" id="RHEA:80079"/>
        <dbReference type="ChEBI" id="CHEBI:15377"/>
        <dbReference type="ChEBI" id="CHEBI:15378"/>
        <dbReference type="ChEBI" id="CHEBI:17748"/>
        <dbReference type="ChEBI" id="CHEBI:18036"/>
        <dbReference type="ChEBI" id="CHEBI:37568"/>
    </reaction>
    <physiologicalReaction direction="left-to-right" evidence="15 18">
        <dbReference type="Rhea" id="RHEA:80080"/>
    </physiologicalReaction>
</comment>
<comment type="cofactor">
    <cofactor evidence="15 22 32 52">
        <name>Mn(2+)</name>
        <dbReference type="ChEBI" id="CHEBI:29035"/>
    </cofactor>
    <text evidence="22">Binds 1 Mn(2+) ion per subunit.</text>
</comment>
<comment type="activity regulation">
    <text evidence="14 15 18 22 24 27 28 29 31 32 38 39">Allosterically activated and regulated via the combined actions of GTP and dNTPs (dATP, dGTP, dTTP and dCTP): Allosteric site 1 binds GTP, while allosteric site 2 binds dNTP (PubMed:22069334, PubMed:25267621, PubMed:25288794, PubMed:25760601). Allosteric activation promotes the formation of highly active homotetramers (PubMed:22056990, PubMed:24141705, PubMed:24217394, PubMed:25267621, PubMed:25288794, PubMed:25760601). Phosphorylation at Thr-592 impairs homotetramerization, thereby inhibiting dNTPase activity, leading to reduced ability to restrict infection by viruses (PubMed:23601106, PubMed:26294762, PubMed:26431200, PubMed:29610582, PubMed:29670289).</text>
</comment>
<comment type="subunit">
    <text evidence="18 22 24 27 28 29 30 31 32 34 35 36 39">Homodimer; in absence of GTP and dNTP (PubMed:24141705, PubMed:24217394, PubMed:25760601, PubMed:28229507). Homotetramer; in GTP- and dNTP-bound form (PubMed:23601106, PubMed:24141705, PubMed:24217394, PubMed:25267621, PubMed:25288794, PubMed:25760601, PubMed:26101257, PubMed:26294762, PubMed:26431200, PubMed:28229507). Interacts with MRE11; leading to stimulate the exonuclease activity of MRE11 (PubMed:28834754, PubMed:29670289). Interacts with RBBP8/CtIP (PubMed:28834754). Interacts (via its C-terminus) with CD81.</text>
</comment>
<comment type="subunit">
    <text evidence="12 13 25">(Microbial infection) Interacts with HIV-2 viral protein Vpx; promoting interaction with a E3 ubiquitin-protein ligase complex containing DCAF1, leading to subsequent ubiquitination and degradation of SAMHD1.</text>
</comment>
<comment type="interaction">
    <interactant intactId="EBI-1054601">
        <id>Q9Y3Z3</id>
    </interactant>
    <interactant intactId="EBI-354956">
        <id>Q08380</id>
        <label>LGALS3BP</label>
    </interactant>
    <organismsDiffer>false</organismsDiffer>
    <experiments>2</experiments>
</comment>
<comment type="interaction">
    <interactant intactId="EBI-1054601">
        <id>Q9Y3Z3</id>
    </interactant>
    <interactant intactId="EBI-1054601">
        <id>Q9Y3Z3</id>
        <label>SAMHD1</label>
    </interactant>
    <organismsDiffer>false</organismsDiffer>
    <experiments>7</experiments>
</comment>
<comment type="interaction">
    <interactant intactId="EBI-1054601">
        <id>Q9Y3Z3</id>
    </interactant>
    <interactant intactId="EBI-528644">
        <id>P58753</id>
        <label>TIRAP</label>
    </interactant>
    <organismsDiffer>false</organismsDiffer>
    <experiments>2</experiments>
</comment>
<comment type="subcellular location">
    <subcellularLocation>
        <location evidence="8 16 20 21 34 36">Nucleus</location>
    </subcellularLocation>
    <subcellularLocation>
        <location evidence="35">Chromosome</location>
    </subcellularLocation>
    <text evidence="35">Localizes to sites of DNA double-strand breaks in response to DNA damage.</text>
</comment>
<comment type="alternative products">
    <event type="alternative splicing"/>
    <isoform>
        <id>Q9Y3Z3-1</id>
        <name>1</name>
        <sequence type="displayed"/>
    </isoform>
    <isoform>
        <id>Q9Y3Z3-3</id>
        <name>3</name>
        <name>delta8-9</name>
        <sequence type="described" ref="VSP_046561"/>
    </isoform>
    <isoform>
        <id>Q9Y3Z3-4</id>
        <name>4</name>
        <name>delta14</name>
        <sequence type="described" ref="VSP_046562"/>
    </isoform>
</comment>
<comment type="tissue specificity">
    <text evidence="5">Expressed in heart, skeletal muscle, spleen, liver, small intestine, placenta, lung and peripheral blood leukocytes (PubMed:11064105). No expression is seen in brain and thymus (PubMed:11064105).</text>
</comment>
<comment type="induction">
    <text evidence="5 6">By IFNG/IFN-gamma. Up-regulated in TNF treated lung fibroblasts.</text>
</comment>
<comment type="domain">
    <text evidence="37">In human, and in contrast to mouse protein, the SAM domain is not required for deoxynucleoside triphosphate (dNTPase) activity and ability to restrict infection by viruses.</text>
</comment>
<comment type="PTM">
    <text evidence="18 19 31 32 38 39">Phosphorylation at Thr-592 by CDK1 acts as a switch to control deoxynucleoside triphosphate (dNTPase)-dependent and -independent functions (PubMed:29670289). Phosphorylation at Thr-592 takes place in cycling cells: it reduces the stability of the homotetramer, impairing the dNTPase activity and subsequent ability to restrict infection by viruses (PubMed:23601106, PubMed:23602554, PubMed:26294762, PubMed:26431200, PubMed:31291580). It also inhibits ability to suppress LINE-1 retrotransposon activity (PubMed:29610582). In contrast, phosphorylation at Thr-592 promotes DNA end resection at stalled replication forks in response to DNA damage (PubMed:29670289).</text>
</comment>
<comment type="PTM">
    <text evidence="40 41">(Microbial infection) Phosphorylation at Thr-592 by Epstein-Barr virus kinase BGLF4 and human cytomegalovirus/HCMV UL97 leads to a reduced level of dCTPase and dTTPase activity and the loss of viral restriction.</text>
</comment>
<comment type="PTM">
    <text evidence="12 13 14 25">(Microbial infection) Ubiquitinated following interaction with HIV-2 viral protein Vpx; Vpx promotes interaction and with a DCX (DDB1-CUL4-X-box) E3 ubiquitin ligase, leading to proteasomal degradation.</text>
</comment>
<comment type="disease" evidence="8 9 10 21 23 34 39">
    <disease id="DI-02499">
        <name>Aicardi-Goutieres syndrome 5</name>
        <acronym>AGS5</acronym>
        <description>A form of Aicardi-Goutieres syndrome, a genetically heterogeneous disease characterized by cerebral atrophy, leukoencephalopathy, intracranial calcifications, chronic cerebrospinal fluid (CSF) lymphocytosis, increased CSF alpha-interferon, and negative serologic investigations for common prenatal infection. Clinical features as thrombocytopenia, hepatosplenomegaly and elevated hepatic transaminases along with intermittent fever may erroneously suggest an infective process. Severe neurological dysfunctions manifest in infancy as progressive microcephaly, spasticity, dystonic posturing and profound psychomotor retardation. Death often occurs in early childhood.</description>
        <dbReference type="MIM" id="612952"/>
    </disease>
    <text>The disease is caused by variants affecting the gene represented in this entry.</text>
</comment>
<comment type="disease" evidence="11">
    <disease id="DI-03338">
        <name>Chilblain lupus 2</name>
        <acronym>CHBL2</acronym>
        <description>A rare cutaneous form of lupus erythematosus. Affected individuals present with painful bluish-red papular or nodular lesions of the skin in acral locations precipitated by cold and wet exposure.</description>
        <dbReference type="MIM" id="614415"/>
    </disease>
    <text>The disease is caused by variants affecting the gene represented in this entry.</text>
</comment>
<comment type="miscellaneous">
    <molecule>Isoform 3</molecule>
    <text evidence="46">Catalytically inactive.</text>
</comment>
<comment type="miscellaneous">
    <molecule>Isoform 4</molecule>
    <text evidence="46">Catalytically inactive.</text>
</comment>
<comment type="similarity">
    <text evidence="46">Belongs to the SAMHD1 family.</text>
</comment>
<comment type="caution">
    <text evidence="14 22 24 27 28 29">Was intially thought to be allosterically stimulated by dGTP (PubMed:22056990, PubMed:24141705, PubMed:24217394). However, it was later shown that it is allosterically activated and regulated via the combined actions of GTP and dNTPs (dATP, dGTP, dTTP and dCTP), which bind two separate binding sites (PubMed:25267621, PubMed:25288794, PubMed:25760601).</text>
</comment>
<comment type="caution">
    <text evidence="18 31 32">Phosphorylation at Thr-592 was initially thought to impair ability to restrict infection by viruses without affecting the deoxynucleoside triphosphate (dNTPase) activity (PubMed:23601106). However, it was later shown that phosphorylation reduces the stability of the homotetramer, leading to impair the dNTPase activity (PubMed:26294762, PubMed:26431200).</text>
</comment>
<comment type="caution">
    <text evidence="17 26 30 39">Was initially thought to have 3'-5' exonuclease activity, acting on single-stranded RNA (PubMed:23364794, PubMed:25038827). A publication also reported some DNA 3'-5' exonuclease activity (PubMed:23364794). However, it was later shown that SAMHD1 does not possess DNA and/or RNA exonuclease activities and that these activities are due to contamination during the purification process that can be removed after chromatography steps (PubMed:26101257). The exonuclease activity observed was maybe due to the presence of MRE11 during the purification steps (PubMed:29670289).</text>
</comment>
<comment type="sequence caution" evidence="46">
    <conflict type="miscellaneous discrepancy">
        <sequence resource="EMBL-CDS" id="BAG65067"/>
    </conflict>
    <text>Unlikely isoform. Aberrant splice sites.</text>
</comment>
<reference key="1">
    <citation type="journal article" date="2000" name="Immunol. Lett.">
        <title>Identification of human homologue of mouse IFN-gamma induced protein from human dendritic cells.</title>
        <authorList>
            <person name="Li N."/>
            <person name="Zhang W."/>
            <person name="Cao X."/>
        </authorList>
    </citation>
    <scope>NUCLEOTIDE SEQUENCE [MRNA] (ISOFORM 1)</scope>
    <scope>TISSUE SPECIFICITY</scope>
    <scope>INDUCTION</scope>
    <source>
        <tissue>Brain</tissue>
    </source>
</reference>
<reference key="2">
    <citation type="submission" date="1998-05" db="EMBL/GenBank/DDBJ databases">
        <title>Molecular and biological characterization of a novel monocyte protein, MOP-5.</title>
        <authorList>
            <person name="Takayama K."/>
            <person name="Yoshimoto M."/>
        </authorList>
    </citation>
    <scope>NUCLEOTIDE SEQUENCE [MRNA] (ISOFORM 1)</scope>
    <source>
        <tissue>Platelet</tissue>
    </source>
</reference>
<reference key="3">
    <citation type="journal article" date="2001" name="Genome Res.">
        <title>Towards a catalog of human genes and proteins: sequencing and analysis of 500 novel complete protein coding human cDNAs.</title>
        <authorList>
            <person name="Wiemann S."/>
            <person name="Weil B."/>
            <person name="Wellenreuther R."/>
            <person name="Gassenhuber J."/>
            <person name="Glassl S."/>
            <person name="Ansorge W."/>
            <person name="Boecher M."/>
            <person name="Bloecker H."/>
            <person name="Bauersachs S."/>
            <person name="Blum H."/>
            <person name="Lauber J."/>
            <person name="Duesterhoeft A."/>
            <person name="Beyer A."/>
            <person name="Koehrer K."/>
            <person name="Strack N."/>
            <person name="Mewes H.-W."/>
            <person name="Ottenwaelder B."/>
            <person name="Obermaier B."/>
            <person name="Tampe J."/>
            <person name="Heubner D."/>
            <person name="Wambutt R."/>
            <person name="Korn B."/>
            <person name="Klein M."/>
            <person name="Poustka A."/>
        </authorList>
    </citation>
    <scope>NUCLEOTIDE SEQUENCE [LARGE SCALE MRNA] (ISOFORM 1)</scope>
    <source>
        <tissue>Brain</tissue>
    </source>
</reference>
<reference key="4">
    <citation type="journal article" date="2004" name="Nat. Genet.">
        <title>Complete sequencing and characterization of 21,243 full-length human cDNAs.</title>
        <authorList>
            <person name="Ota T."/>
            <person name="Suzuki Y."/>
            <person name="Nishikawa T."/>
            <person name="Otsuki T."/>
            <person name="Sugiyama T."/>
            <person name="Irie R."/>
            <person name="Wakamatsu A."/>
            <person name="Hayashi K."/>
            <person name="Sato H."/>
            <person name="Nagai K."/>
            <person name="Kimura K."/>
            <person name="Makita H."/>
            <person name="Sekine M."/>
            <person name="Obayashi M."/>
            <person name="Nishi T."/>
            <person name="Shibahara T."/>
            <person name="Tanaka T."/>
            <person name="Ishii S."/>
            <person name="Yamamoto J."/>
            <person name="Saito K."/>
            <person name="Kawai Y."/>
            <person name="Isono Y."/>
            <person name="Nakamura Y."/>
            <person name="Nagahari K."/>
            <person name="Murakami K."/>
            <person name="Yasuda T."/>
            <person name="Iwayanagi T."/>
            <person name="Wagatsuma M."/>
            <person name="Shiratori A."/>
            <person name="Sudo H."/>
            <person name="Hosoiri T."/>
            <person name="Kaku Y."/>
            <person name="Kodaira H."/>
            <person name="Kondo H."/>
            <person name="Sugawara M."/>
            <person name="Takahashi M."/>
            <person name="Kanda K."/>
            <person name="Yokoi T."/>
            <person name="Furuya T."/>
            <person name="Kikkawa E."/>
            <person name="Omura Y."/>
            <person name="Abe K."/>
            <person name="Kamihara K."/>
            <person name="Katsuta N."/>
            <person name="Sato K."/>
            <person name="Tanikawa M."/>
            <person name="Yamazaki M."/>
            <person name="Ninomiya K."/>
            <person name="Ishibashi T."/>
            <person name="Yamashita H."/>
            <person name="Murakawa K."/>
            <person name="Fujimori K."/>
            <person name="Tanai H."/>
            <person name="Kimata M."/>
            <person name="Watanabe M."/>
            <person name="Hiraoka S."/>
            <person name="Chiba Y."/>
            <person name="Ishida S."/>
            <person name="Ono Y."/>
            <person name="Takiguchi S."/>
            <person name="Watanabe S."/>
            <person name="Yosida M."/>
            <person name="Hotuta T."/>
            <person name="Kusano J."/>
            <person name="Kanehori K."/>
            <person name="Takahashi-Fujii A."/>
            <person name="Hara H."/>
            <person name="Tanase T.-O."/>
            <person name="Nomura Y."/>
            <person name="Togiya S."/>
            <person name="Komai F."/>
            <person name="Hara R."/>
            <person name="Takeuchi K."/>
            <person name="Arita M."/>
            <person name="Imose N."/>
            <person name="Musashino K."/>
            <person name="Yuuki H."/>
            <person name="Oshima A."/>
            <person name="Sasaki N."/>
            <person name="Aotsuka S."/>
            <person name="Yoshikawa Y."/>
            <person name="Matsunawa H."/>
            <person name="Ichihara T."/>
            <person name="Shiohata N."/>
            <person name="Sano S."/>
            <person name="Moriya S."/>
            <person name="Momiyama H."/>
            <person name="Satoh N."/>
            <person name="Takami S."/>
            <person name="Terashima Y."/>
            <person name="Suzuki O."/>
            <person name="Nakagawa S."/>
            <person name="Senoh A."/>
            <person name="Mizoguchi H."/>
            <person name="Goto Y."/>
            <person name="Shimizu F."/>
            <person name="Wakebe H."/>
            <person name="Hishigaki H."/>
            <person name="Watanabe T."/>
            <person name="Sugiyama A."/>
            <person name="Takemoto M."/>
            <person name="Kawakami B."/>
            <person name="Yamazaki M."/>
            <person name="Watanabe K."/>
            <person name="Kumagai A."/>
            <person name="Itakura S."/>
            <person name="Fukuzumi Y."/>
            <person name="Fujimori Y."/>
            <person name="Komiyama M."/>
            <person name="Tashiro H."/>
            <person name="Tanigami A."/>
            <person name="Fujiwara T."/>
            <person name="Ono T."/>
            <person name="Yamada K."/>
            <person name="Fujii Y."/>
            <person name="Ozaki K."/>
            <person name="Hirao M."/>
            <person name="Ohmori Y."/>
            <person name="Kawabata A."/>
            <person name="Hikiji T."/>
            <person name="Kobatake N."/>
            <person name="Inagaki H."/>
            <person name="Ikema Y."/>
            <person name="Okamoto S."/>
            <person name="Okitani R."/>
            <person name="Kawakami T."/>
            <person name="Noguchi S."/>
            <person name="Itoh T."/>
            <person name="Shigeta K."/>
            <person name="Senba T."/>
            <person name="Matsumura K."/>
            <person name="Nakajima Y."/>
            <person name="Mizuno T."/>
            <person name="Morinaga M."/>
            <person name="Sasaki M."/>
            <person name="Togashi T."/>
            <person name="Oyama M."/>
            <person name="Hata H."/>
            <person name="Watanabe M."/>
            <person name="Komatsu T."/>
            <person name="Mizushima-Sugano J."/>
            <person name="Satoh T."/>
            <person name="Shirai Y."/>
            <person name="Takahashi Y."/>
            <person name="Nakagawa K."/>
            <person name="Okumura K."/>
            <person name="Nagase T."/>
            <person name="Nomura N."/>
            <person name="Kikuchi H."/>
            <person name="Masuho Y."/>
            <person name="Yamashita R."/>
            <person name="Nakai K."/>
            <person name="Yada T."/>
            <person name="Nakamura Y."/>
            <person name="Ohara O."/>
            <person name="Isogai T."/>
            <person name="Sugano S."/>
        </authorList>
    </citation>
    <scope>NUCLEOTIDE SEQUENCE [LARGE SCALE MRNA] (ISOFORM 1)</scope>
    <source>
        <tissue>Placenta</tissue>
        <tissue>Trachea</tissue>
    </source>
</reference>
<reference key="5">
    <citation type="journal article" date="2001" name="Nature">
        <title>The DNA sequence and comparative analysis of human chromosome 20.</title>
        <authorList>
            <person name="Deloukas P."/>
            <person name="Matthews L.H."/>
            <person name="Ashurst J.L."/>
            <person name="Burton J."/>
            <person name="Gilbert J.G.R."/>
            <person name="Jones M."/>
            <person name="Stavrides G."/>
            <person name="Almeida J.P."/>
            <person name="Babbage A.K."/>
            <person name="Bagguley C.L."/>
            <person name="Bailey J."/>
            <person name="Barlow K.F."/>
            <person name="Bates K.N."/>
            <person name="Beard L.M."/>
            <person name="Beare D.M."/>
            <person name="Beasley O.P."/>
            <person name="Bird C.P."/>
            <person name="Blakey S.E."/>
            <person name="Bridgeman A.M."/>
            <person name="Brown A.J."/>
            <person name="Buck D."/>
            <person name="Burrill W.D."/>
            <person name="Butler A.P."/>
            <person name="Carder C."/>
            <person name="Carter N.P."/>
            <person name="Chapman J.C."/>
            <person name="Clamp M."/>
            <person name="Clark G."/>
            <person name="Clark L.N."/>
            <person name="Clark S.Y."/>
            <person name="Clee C.M."/>
            <person name="Clegg S."/>
            <person name="Cobley V.E."/>
            <person name="Collier R.E."/>
            <person name="Connor R.E."/>
            <person name="Corby N.R."/>
            <person name="Coulson A."/>
            <person name="Coville G.J."/>
            <person name="Deadman R."/>
            <person name="Dhami P.D."/>
            <person name="Dunn M."/>
            <person name="Ellington A.G."/>
            <person name="Frankland J.A."/>
            <person name="Fraser A."/>
            <person name="French L."/>
            <person name="Garner P."/>
            <person name="Grafham D.V."/>
            <person name="Griffiths C."/>
            <person name="Griffiths M.N.D."/>
            <person name="Gwilliam R."/>
            <person name="Hall R.E."/>
            <person name="Hammond S."/>
            <person name="Harley J.L."/>
            <person name="Heath P.D."/>
            <person name="Ho S."/>
            <person name="Holden J.L."/>
            <person name="Howden P.J."/>
            <person name="Huckle E."/>
            <person name="Hunt A.R."/>
            <person name="Hunt S.E."/>
            <person name="Jekosch K."/>
            <person name="Johnson C.M."/>
            <person name="Johnson D."/>
            <person name="Kay M.P."/>
            <person name="Kimberley A.M."/>
            <person name="King A."/>
            <person name="Knights A."/>
            <person name="Laird G.K."/>
            <person name="Lawlor S."/>
            <person name="Lehvaeslaiho M.H."/>
            <person name="Leversha M.A."/>
            <person name="Lloyd C."/>
            <person name="Lloyd D.M."/>
            <person name="Lovell J.D."/>
            <person name="Marsh V.L."/>
            <person name="Martin S.L."/>
            <person name="McConnachie L.J."/>
            <person name="McLay K."/>
            <person name="McMurray A.A."/>
            <person name="Milne S.A."/>
            <person name="Mistry D."/>
            <person name="Moore M.J.F."/>
            <person name="Mullikin J.C."/>
            <person name="Nickerson T."/>
            <person name="Oliver K."/>
            <person name="Parker A."/>
            <person name="Patel R."/>
            <person name="Pearce T.A.V."/>
            <person name="Peck A.I."/>
            <person name="Phillimore B.J.C.T."/>
            <person name="Prathalingam S.R."/>
            <person name="Plumb R.W."/>
            <person name="Ramsay H."/>
            <person name="Rice C.M."/>
            <person name="Ross M.T."/>
            <person name="Scott C.E."/>
            <person name="Sehra H.K."/>
            <person name="Shownkeen R."/>
            <person name="Sims S."/>
            <person name="Skuce C.D."/>
            <person name="Smith M.L."/>
            <person name="Soderlund C."/>
            <person name="Steward C.A."/>
            <person name="Sulston J.E."/>
            <person name="Swann R.M."/>
            <person name="Sycamore N."/>
            <person name="Taylor R."/>
            <person name="Tee L."/>
            <person name="Thomas D.W."/>
            <person name="Thorpe A."/>
            <person name="Tracey A."/>
            <person name="Tromans A.C."/>
            <person name="Vaudin M."/>
            <person name="Wall M."/>
            <person name="Wallis J.M."/>
            <person name="Whitehead S.L."/>
            <person name="Whittaker P."/>
            <person name="Willey D.L."/>
            <person name="Williams L."/>
            <person name="Williams S.A."/>
            <person name="Wilming L."/>
            <person name="Wray P.W."/>
            <person name="Hubbard T."/>
            <person name="Durbin R.M."/>
            <person name="Bentley D.R."/>
            <person name="Beck S."/>
            <person name="Rogers J."/>
        </authorList>
    </citation>
    <scope>NUCLEOTIDE SEQUENCE [LARGE SCALE GENOMIC DNA]</scope>
</reference>
<reference key="6">
    <citation type="submission" date="2005-09" db="EMBL/GenBank/DDBJ databases">
        <authorList>
            <person name="Mural R.J."/>
            <person name="Istrail S."/>
            <person name="Sutton G.G."/>
            <person name="Florea L."/>
            <person name="Halpern A.L."/>
            <person name="Mobarry C.M."/>
            <person name="Lippert R."/>
            <person name="Walenz B."/>
            <person name="Shatkay H."/>
            <person name="Dew I."/>
            <person name="Miller J.R."/>
            <person name="Flanigan M.J."/>
            <person name="Edwards N.J."/>
            <person name="Bolanos R."/>
            <person name="Fasulo D."/>
            <person name="Halldorsson B.V."/>
            <person name="Hannenhalli S."/>
            <person name="Turner R."/>
            <person name="Yooseph S."/>
            <person name="Lu F."/>
            <person name="Nusskern D.R."/>
            <person name="Shue B.C."/>
            <person name="Zheng X.H."/>
            <person name="Zhong F."/>
            <person name="Delcher A.L."/>
            <person name="Huson D.H."/>
            <person name="Kravitz S.A."/>
            <person name="Mouchard L."/>
            <person name="Reinert K."/>
            <person name="Remington K.A."/>
            <person name="Clark A.G."/>
            <person name="Waterman M.S."/>
            <person name="Eichler E.E."/>
            <person name="Adams M.D."/>
            <person name="Hunkapiller M.W."/>
            <person name="Myers E.W."/>
            <person name="Venter J.C."/>
        </authorList>
    </citation>
    <scope>NUCLEOTIDE SEQUENCE [LARGE SCALE GENOMIC DNA]</scope>
</reference>
<reference key="7">
    <citation type="journal article" date="2004" name="Genome Res.">
        <title>The status, quality, and expansion of the NIH full-length cDNA project: the Mammalian Gene Collection (MGC).</title>
        <authorList>
            <consortium name="The MGC Project Team"/>
        </authorList>
    </citation>
    <scope>NUCLEOTIDE SEQUENCE [LARGE SCALE MRNA] (ISOFORM 1)</scope>
    <source>
        <tissue>Brain</tissue>
    </source>
</reference>
<reference key="8">
    <citation type="submission" date="2006-05" db="UniProtKB">
        <authorList>
            <person name="Bienvenut W.V."/>
            <person name="Kanor S."/>
            <person name="Tissot J.-D."/>
            <person name="Quadroni M."/>
        </authorList>
    </citation>
    <scope>PROTEIN SEQUENCE OF 1-10</scope>
    <scope>ACETYLATION AT MET-1</scope>
    <scope>IDENTIFICATION BY MASS SPECTROMETRY</scope>
    <source>
        <tissue>T-cell</tissue>
    </source>
</reference>
<reference key="9">
    <citation type="journal article" date="2006" name="Cell">
        <title>Global, in vivo, and site-specific phosphorylation dynamics in signaling networks.</title>
        <authorList>
            <person name="Olsen J.V."/>
            <person name="Blagoev B."/>
            <person name="Gnad F."/>
            <person name="Macek B."/>
            <person name="Kumar C."/>
            <person name="Mortensen P."/>
            <person name="Mann M."/>
        </authorList>
    </citation>
    <scope>PHOSPHORYLATION [LARGE SCALE ANALYSIS] AT THR-592</scope>
    <scope>IDENTIFICATION BY MASS SPECTROMETRY [LARGE SCALE ANALYSIS]</scope>
    <source>
        <tissue>Cervix carcinoma</tissue>
    </source>
</reference>
<reference key="10">
    <citation type="journal article" date="2008" name="Mol. Cell">
        <title>Kinase-selective enrichment enables quantitative phosphoproteomics of the kinome across the cell cycle.</title>
        <authorList>
            <person name="Daub H."/>
            <person name="Olsen J.V."/>
            <person name="Bairlein M."/>
            <person name="Gnad F."/>
            <person name="Oppermann F.S."/>
            <person name="Korner R."/>
            <person name="Greff Z."/>
            <person name="Keri G."/>
            <person name="Stemmann O."/>
            <person name="Mann M."/>
        </authorList>
    </citation>
    <scope>PHOSPHORYLATION [LARGE SCALE ANALYSIS] AT THR-592</scope>
    <scope>IDENTIFICATION BY MASS SPECTROMETRY [LARGE SCALE ANALYSIS]</scope>
    <source>
        <tissue>Cervix carcinoma</tissue>
    </source>
</reference>
<reference key="11">
    <citation type="journal article" date="2008" name="Proc. Natl. Acad. Sci. U.S.A.">
        <title>A quantitative atlas of mitotic phosphorylation.</title>
        <authorList>
            <person name="Dephoure N."/>
            <person name="Zhou C."/>
            <person name="Villen J."/>
            <person name="Beausoleil S.A."/>
            <person name="Bakalarski C.E."/>
            <person name="Elledge S.J."/>
            <person name="Gygi S.P."/>
        </authorList>
    </citation>
    <scope>PHOSPHORYLATION [LARGE SCALE ANALYSIS] AT THR-592</scope>
    <scope>IDENTIFICATION BY MASS SPECTROMETRY [LARGE SCALE ANALYSIS]</scope>
    <source>
        <tissue>Cervix carcinoma</tissue>
    </source>
</reference>
<reference key="12">
    <citation type="journal article" date="2008" name="Proteomics">
        <title>Dendritic cell-derived interferon-gamma-induced protein mediates tumor necrosis factor-alpha stimulation of human lung fibroblasts.</title>
        <authorList>
            <person name="Liao W."/>
            <person name="Bao Z."/>
            <person name="Cheng C."/>
            <person name="Mok Y.-K."/>
            <person name="Wong W.S."/>
        </authorList>
    </citation>
    <scope>INDUCTION</scope>
    <scope>IDENTIFICATION BY MASS SPECTROMETRY</scope>
</reference>
<reference key="13">
    <citation type="journal article" date="2009" name="Anal. Chem.">
        <title>Lys-N and trypsin cover complementary parts of the phosphoproteome in a refined SCX-based approach.</title>
        <authorList>
            <person name="Gauci S."/>
            <person name="Helbig A.O."/>
            <person name="Slijper M."/>
            <person name="Krijgsveld J."/>
            <person name="Heck A.J."/>
            <person name="Mohammed S."/>
        </authorList>
    </citation>
    <scope>ACETYLATION [LARGE SCALE ANALYSIS] AT MET-1</scope>
    <scope>IDENTIFICATION BY MASS SPECTROMETRY [LARGE SCALE ANALYSIS]</scope>
</reference>
<reference key="14">
    <citation type="journal article" date="2009" name="Mol. Cell. Proteomics">
        <title>Large-scale proteomics analysis of the human kinome.</title>
        <authorList>
            <person name="Oppermann F.S."/>
            <person name="Gnad F."/>
            <person name="Olsen J.V."/>
            <person name="Hornberger R."/>
            <person name="Greff Z."/>
            <person name="Keri G."/>
            <person name="Mann M."/>
            <person name="Daub H."/>
        </authorList>
    </citation>
    <scope>PHOSPHORYLATION [LARGE SCALE ANALYSIS] AT THR-592</scope>
    <scope>IDENTIFICATION BY MASS SPECTROMETRY [LARGE SCALE ANALYSIS]</scope>
</reference>
<reference key="15">
    <citation type="journal article" date="2010" name="Hum. Mutat.">
        <title>Cerebral arterial stenoses and stroke: novel features of Aicardi-Goutieres syndrome caused by the Arg164X mutation in SAMHD1 are associated with altered cytokine expression.</title>
        <authorList>
            <person name="Thiele H."/>
            <person name="du Moulin M."/>
            <person name="Barczyk K."/>
            <person name="George C."/>
            <person name="Schwindt W."/>
            <person name="Nurnberg G."/>
            <person name="Frosch M."/>
            <person name="Kurlemann G."/>
            <person name="Roth J."/>
            <person name="Nurnberg P."/>
            <person name="Rutsch F."/>
        </authorList>
    </citation>
    <scope>INVOLVEMENT IN AGS5</scope>
</reference>
<reference key="16">
    <citation type="journal article" date="2010" name="Sci. Signal.">
        <title>Quantitative phosphoproteomics reveals widespread full phosphorylation site occupancy during mitosis.</title>
        <authorList>
            <person name="Olsen J.V."/>
            <person name="Vermeulen M."/>
            <person name="Santamaria A."/>
            <person name="Kumar C."/>
            <person name="Miller M.L."/>
            <person name="Jensen L.J."/>
            <person name="Gnad F."/>
            <person name="Cox J."/>
            <person name="Jensen T.S."/>
            <person name="Nigg E.A."/>
            <person name="Brunak S."/>
            <person name="Mann M."/>
        </authorList>
    </citation>
    <scope>PHOSPHORYLATION [LARGE SCALE ANALYSIS] AT THR-592</scope>
    <scope>IDENTIFICATION BY MASS SPECTROMETRY [LARGE SCALE ANALYSIS]</scope>
    <source>
        <tissue>Cervix carcinoma</tissue>
    </source>
</reference>
<reference key="17">
    <citation type="journal article" date="2011" name="BMC Syst. Biol.">
        <title>Initial characterization of the human central proteome.</title>
        <authorList>
            <person name="Burkard T.R."/>
            <person name="Planyavsky M."/>
            <person name="Kaupe I."/>
            <person name="Breitwieser F.P."/>
            <person name="Buerckstuemmer T."/>
            <person name="Bennett K.L."/>
            <person name="Superti-Furga G."/>
            <person name="Colinge J."/>
        </authorList>
    </citation>
    <scope>IDENTIFICATION BY MASS SPECTROMETRY [LARGE SCALE ANALYSIS]</scope>
</reference>
<reference key="18">
    <citation type="journal article" date="2011" name="J. Biol. Chem.">
        <title>Aicardi-Goutieres syndrome gene and HIV-1 restriction factor SAMHD1 is a dGTP-regulated deoxynucleotide triphosphohydrolase.</title>
        <authorList>
            <person name="Powell R.D."/>
            <person name="Holland P.J."/>
            <person name="Hollis T."/>
            <person name="Perrino F.W."/>
        </authorList>
    </citation>
    <scope>CATALYTIC ACTIVITY</scope>
    <scope>COFACTOR</scope>
    <scope>ACTIVITY REGULATION</scope>
</reference>
<reference key="19">
    <citation type="journal article" date="2011" name="Nature">
        <title>SAMHD1 is the dendritic- and myeloid-cell-specific HIV-1 restriction factor counteracted by Vpx.</title>
        <authorList>
            <person name="Laguette N."/>
            <person name="Sobhian B."/>
            <person name="Casartelli N."/>
            <person name="Ringeard M."/>
            <person name="Chable-Bessia C."/>
            <person name="Segeral E."/>
            <person name="Yatim A."/>
            <person name="Emiliani S."/>
            <person name="Schwartz O."/>
            <person name="Benkirane M."/>
        </authorList>
    </citation>
    <scope>FUNCTION</scope>
    <scope>INTERACTION WITH HIV-2 VIRUS PROTEIN VPX (MICROBIAL INFECTION)</scope>
    <scope>UBIQUITINATION (MICROBIAL INFECTION)</scope>
    <scope>MUTAGENESIS OF 206-HIS-ASP-207</scope>
</reference>
<reference key="20">
    <citation type="journal article" date="2011" name="Nature">
        <title>Vpx relieves inhibition of HIV-1 infection of macrophages mediated by the SAMHD1 protein.</title>
        <authorList>
            <person name="Hrecka K."/>
            <person name="Hao C."/>
            <person name="Gierszewska M."/>
            <person name="Swanson S.K."/>
            <person name="Kesik-Brodacka M."/>
            <person name="Srivastava S."/>
            <person name="Florens L."/>
            <person name="Washburn M.P."/>
            <person name="Skowronski J."/>
        </authorList>
    </citation>
    <scope>FUNCTION</scope>
    <scope>INTERACTION WITH HIV-2 VIRUS PROTEIN VPX (MICROBIAL INFECTION)</scope>
    <scope>UBIQUITINATION (MICROBIAL INFECTION)</scope>
</reference>
<reference key="21">
    <citation type="journal article" date="2012" name="Retrovirology">
        <title>Identification and characterization of naturally occurring splice variants of SAMHD1.</title>
        <authorList>
            <person name="Welbourn S."/>
            <person name="Miyagi E."/>
            <person name="White T.E."/>
            <person name="Diaz-Griffero F."/>
            <person name="Strebel K."/>
        </authorList>
    </citation>
    <scope>SUBCELLULAR LOCATION</scope>
    <scope>ALTERNATIVE SPLICING (ISOFORMS 3 AND 4)</scope>
</reference>
<reference key="22">
    <citation type="journal article" date="2013" name="Cell Rep.">
        <title>Phosphorylation of SAMHD1 by cyclin A2/CDK1 regulates its restriction activity toward HIV-1.</title>
        <authorList>
            <person name="Cribier A."/>
            <person name="Descours B."/>
            <person name="Valadao A.L."/>
            <person name="Laguette N."/>
            <person name="Benkirane M."/>
        </authorList>
    </citation>
    <scope>FUNCTION</scope>
    <scope>PHOSPHORYLATION AT THR-592</scope>
    <scope>MUTAGENESIS OF 206-HIS-ASP-207 AND THR-592</scope>
</reference>
<reference key="23">
    <citation type="journal article" date="2013" name="Cell Rep.">
        <title>Modulation of LINE-1 and Alu/SVA retrotransposition by Aicardi-Goutieres syndrome-related SAMHD1.</title>
        <authorList>
            <person name="Zhao K."/>
            <person name="Du J."/>
            <person name="Han X."/>
            <person name="Goodier J.L."/>
            <person name="Li P."/>
            <person name="Zhou X."/>
            <person name="Wei W."/>
            <person name="Evans S.L."/>
            <person name="Li L."/>
            <person name="Zhang W."/>
            <person name="Cheung L.E."/>
            <person name="Wang G."/>
            <person name="Kazazian H.H. Jr."/>
            <person name="Yu X.F."/>
        </authorList>
    </citation>
    <scope>FUNCTION</scope>
    <scope>SUBCELLULAR LOCATION</scope>
    <scope>CHARACTERIZATION OF VARIANTS AGS5 PRO-123; HIS-143; GLN-145; TYR-167; ASN-201; SER-209; VAL-254 AND HIS-290</scope>
</reference>
<reference key="24">
    <citation type="journal article" date="2013" name="Cell Host Microbe">
        <title>The retroviral restriction ability of SAMHD1, but not its deoxynucleotide triphosphohydrolase activity, is regulated by phosphorylation.</title>
        <authorList>
            <person name="White T.E."/>
            <person name="Brandariz-Nunez A."/>
            <person name="Valle-Casuso J.C."/>
            <person name="Amie S."/>
            <person name="Nguyen L.A."/>
            <person name="Kim B."/>
            <person name="Tuzova M."/>
            <person name="Diaz-Griffero F."/>
        </authorList>
    </citation>
    <scope>FUNCTION</scope>
    <scope>CATALYTIC ACTIVITY</scope>
    <scope>SUBUNIT</scope>
    <scope>ACTIVITY REGULATION</scope>
    <scope>PHOSPHORYLATION AT THR-592</scope>
    <scope>MUTAGENESIS OF THR-592 AND PRO-593</scope>
</reference>
<reference key="25">
    <citation type="journal article" date="2013" name="J. Biol. Chem.">
        <title>Nuclease activity of the human SAMHD1 protein implicated in the Aicardi-Goutieres syndrome and HIV-1 restriction.</title>
        <authorList>
            <person name="Beloglazova N."/>
            <person name="Flick R."/>
            <person name="Tchigvintsev A."/>
            <person name="Brown G."/>
            <person name="Popovic A."/>
            <person name="Nocek B."/>
            <person name="Yakunin A.F."/>
        </authorList>
    </citation>
    <scope>FUNCTION</scope>
</reference>
<reference key="26">
    <citation type="journal article" date="2013" name="J. Proteome Res.">
        <title>Toward a comprehensive characterization of a human cancer cell phosphoproteome.</title>
        <authorList>
            <person name="Zhou H."/>
            <person name="Di Palma S."/>
            <person name="Preisinger C."/>
            <person name="Peng M."/>
            <person name="Polat A.N."/>
            <person name="Heck A.J."/>
            <person name="Mohammed S."/>
        </authorList>
    </citation>
    <scope>PHOSPHORYLATION [LARGE SCALE ANALYSIS] AT SER-33; SER-93 AND THR-592</scope>
    <scope>IDENTIFICATION BY MASS SPECTROMETRY [LARGE SCALE ANALYSIS]</scope>
    <source>
        <tissue>Cervix carcinoma</tissue>
        <tissue>Erythroleukemia</tissue>
    </source>
</reference>
<reference key="27">
    <citation type="journal article" date="2013" name="Proc. Natl. Acad. Sci. U.S.A.">
        <title>The deoxynucleotide triphosphohydrolase SAMHD1 is a major regulator of DNA precursor pools in mammalian cells.</title>
        <authorList>
            <person name="Franzolin E."/>
            <person name="Pontarin G."/>
            <person name="Rampazzo C."/>
            <person name="Miazzi C."/>
            <person name="Ferraro P."/>
            <person name="Palumbo E."/>
            <person name="Reichard P."/>
            <person name="Bianchi V."/>
        </authorList>
    </citation>
    <scope>FUNCTION</scope>
    <scope>SUBCELLULAR LOCATION</scope>
</reference>
<reference key="28">
    <citation type="journal article" date="2014" name="J. Proteomics">
        <title>An enzyme assisted RP-RPLC approach for in-depth analysis of human liver phosphoproteome.</title>
        <authorList>
            <person name="Bian Y."/>
            <person name="Song C."/>
            <person name="Cheng K."/>
            <person name="Dong M."/>
            <person name="Wang F."/>
            <person name="Huang J."/>
            <person name="Sun D."/>
            <person name="Wang L."/>
            <person name="Ye M."/>
            <person name="Zou H."/>
        </authorList>
    </citation>
    <scope>PHOSPHORYLATION [LARGE SCALE ANALYSIS] AT SER-33 AND THR-592</scope>
    <scope>IDENTIFICATION BY MASS SPECTROMETRY [LARGE SCALE ANALYSIS]</scope>
    <source>
        <tissue>Liver</tissue>
    </source>
</reference>
<reference key="29">
    <citation type="journal article" date="2014" name="Nat. Med.">
        <title>The ribonuclease activity of SAMHD1 is required for HIV-1 restriction.</title>
        <authorList>
            <person name="Ryoo J."/>
            <person name="Choi J."/>
            <person name="Oh C."/>
            <person name="Kim S."/>
            <person name="Seo M."/>
            <person name="Kim S.Y."/>
            <person name="Seo D."/>
            <person name="Kim J."/>
            <person name="White T.E."/>
            <person name="Brandariz-Nunez A."/>
            <person name="Diaz-Griffero F."/>
            <person name="Yun C.H."/>
            <person name="Hollenbaugh J.A."/>
            <person name="Kim B."/>
            <person name="Baek D."/>
            <person name="Ahn K."/>
        </authorList>
    </citation>
    <scope>FUNCTION</scope>
    <scope>MUTAGENESIS OF ASP-137; ASP-207 AND ASP-311</scope>
</reference>
<reference key="30">
    <citation type="journal article" date="2015" name="Nucleic Acids Res.">
        <title>SAMHD1 is a single-stranded nucleic acid binding protein with no active site-associated nuclease activity.</title>
        <authorList>
            <person name="Seamon K.J."/>
            <person name="Sun Z."/>
            <person name="Shlyakhtenko L.S."/>
            <person name="Lyubchenko Y.L."/>
            <person name="Stivers J.T."/>
        </authorList>
    </citation>
    <scope>FUNCTION</scope>
    <scope>CATALYTIC ACTIVITY</scope>
    <scope>MUTAGENESIS OF 206-HIS-ASP-207; ASP-207; ARG-451; GLN-548 AND THR-592</scope>
</reference>
<reference key="31">
    <citation type="journal article" date="2016" name="Cell Rep.">
        <title>Restriction by SAMHD1 limits cGAS/STING-dependent innate and adaptive immune responses to HIV-1.</title>
        <authorList>
            <person name="Maelfait J."/>
            <person name="Bridgeman A."/>
            <person name="Benlahrech A."/>
            <person name="Cursi C."/>
            <person name="Rehwinkel J."/>
        </authorList>
    </citation>
    <scope>FUNCTION</scope>
</reference>
<reference key="32">
    <citation type="journal article" date="2017" name="Cell Rep.">
        <title>SAMHD1 promotes DNA end resection to facilitate DNA repair by homologous recombination.</title>
        <authorList>
            <person name="Daddacha W."/>
            <person name="Koyen A.E."/>
            <person name="Bastien A.J."/>
            <person name="Head P.E."/>
            <person name="Dhere V.R."/>
            <person name="Nabeta G.N."/>
            <person name="Connolly E.C."/>
            <person name="Werner E."/>
            <person name="Madden M.Z."/>
            <person name="Daly M.B."/>
            <person name="Minten E.V."/>
            <person name="Whelan D.R."/>
            <person name="Schlafstein A.J."/>
            <person name="Zhang H."/>
            <person name="Anand R."/>
            <person name="Doronio C."/>
            <person name="Withers A.E."/>
            <person name="Shepard C."/>
            <person name="Sundaram R.K."/>
            <person name="Deng X."/>
            <person name="Dynan W.S."/>
            <person name="Wang Y."/>
            <person name="Bindra R.S."/>
            <person name="Cejka P."/>
            <person name="Rothenberg E."/>
            <person name="Doetsch P.W."/>
            <person name="Kim B."/>
            <person name="Yu D.S."/>
        </authorList>
    </citation>
    <scope>FUNCTION</scope>
    <scope>SUBCELLULAR LOCATION</scope>
    <scope>INTERACTION WITH MRE11 AND RBBP8</scope>
    <scope>MUTAGENESIS OF 206-HIS-ASP-207</scope>
</reference>
<reference key="33">
    <citation type="journal article" date="2017" name="Hum. Mutat.">
        <title>A SAMHD1 mutation associated with Aicardi-Goutieres Syndrome uncouples the ability of SAMHD1 to restrict HIV-1 from its ability to downmodulate type I interferon in humans.</title>
        <authorList>
            <person name="White T.E."/>
            <person name="Brandariz-Nunez A."/>
            <person name="Martinez-Lopez A."/>
            <person name="Knowlton C."/>
            <person name="Lenzi G."/>
            <person name="Kim B."/>
            <person name="Ivanov D."/>
            <person name="Diaz-Griffero F."/>
        </authorList>
    </citation>
    <scope>FUNCTION</scope>
    <scope>SUBUNIT</scope>
    <scope>SUBCELLULAR LOCATION</scope>
    <scope>CHARACTERIZATION OF VARIANTS AGS5 PRO-123; CYS-143; HIS-143; GLN-145; TYR-167; ASN-201; SER-209; VAL-254; HIS-290; SER-369; VAL-385 AND THR-448</scope>
    <scope>MUTAGENESIS OF ARG-226; ASP-311 AND GLN-548</scope>
</reference>
<reference key="34">
    <citation type="journal article" date="2017" name="Nat. Microbiol.">
        <title>CD81 association with SAMHD1 enhances HIV-1 reverse transcription by increasing dNTP levels.</title>
        <authorList>
            <person name="Rocha-Perugini V."/>
            <person name="Suarez H."/>
            <person name="Alvarez S."/>
            <person name="Lopez-Martin S."/>
            <person name="Lenzi G.M."/>
            <person name="Vences-Catalan F."/>
            <person name="Levy S."/>
            <person name="Kim B."/>
            <person name="Munoz-Fernandez M.A."/>
            <person name="Sanchez-Madrid F."/>
            <person name="Yanez-Mo M."/>
        </authorList>
    </citation>
    <scope>SUBCELLULAR LOCATION</scope>
    <scope>INTERACTION WITH CD81</scope>
</reference>
<reference key="35">
    <citation type="journal article" date="2017" name="Nat. Struct. Mol. Biol.">
        <title>Site-specific mapping of the human SUMO proteome reveals co-modification with phosphorylation.</title>
        <authorList>
            <person name="Hendriks I.A."/>
            <person name="Lyon D."/>
            <person name="Young C."/>
            <person name="Jensen L.J."/>
            <person name="Vertegaal A.C."/>
            <person name="Nielsen M.L."/>
        </authorList>
    </citation>
    <scope>SUMOYLATION [LARGE SCALE ANALYSIS] AT LYS-467; LYS-469; LYS-492 AND LYS-622</scope>
    <scope>IDENTIFICATION BY MASS SPECTROMETRY [LARGE SCALE ANALYSIS]</scope>
</reference>
<reference key="36">
    <citation type="journal article" date="2018" name="Mob. DNA">
        <title>The SAMHD1-mediated block of LINE-1 retroelements is regulated by phosphorylation.</title>
        <authorList>
            <person name="Herrmann A."/>
            <person name="Wittmann S."/>
            <person name="Thomas D."/>
            <person name="Shepard C.N."/>
            <person name="Kim B."/>
            <person name="Ferreiros N."/>
            <person name="Gramberg T."/>
        </authorList>
    </citation>
    <scope>FUNCTION</scope>
    <scope>CATALYTIC ACTIVITY</scope>
    <scope>ACTIVITY REGULATION</scope>
    <scope>PHOSPHORYLATION AT THR-592</scope>
</reference>
<reference key="37">
    <citation type="journal article" date="2018" name="Nature">
        <title>SAMHD1 acts at stalled replication forks to prevent interferon induction.</title>
        <authorList>
            <person name="Coquel F."/>
            <person name="Silva M.J."/>
            <person name="Techer H."/>
            <person name="Zadorozhny K."/>
            <person name="Sharma S."/>
            <person name="Nieminuszczy J."/>
            <person name="Mettling C."/>
            <person name="Dardillac E."/>
            <person name="Barthe A."/>
            <person name="Schmitz A.L."/>
            <person name="Promonet A."/>
            <person name="Cribier A."/>
            <person name="Sarrazin A."/>
            <person name="Niedzwiedz W."/>
            <person name="Lopez B."/>
            <person name="Costanzo V."/>
            <person name="Krejci L."/>
            <person name="Chabes A."/>
            <person name="Benkirane M."/>
            <person name="Lin Y.L."/>
            <person name="Pasero P."/>
        </authorList>
    </citation>
    <scope>FUNCTION</scope>
    <scope>CATALYTIC ACTIVITY</scope>
    <scope>ACTIVITY REGULATION</scope>
    <scope>SUBCELLULAR LOCATION</scope>
    <scope>INTERACTION WITH MRE11</scope>
    <scope>PHOSPHORYLATION AT THR-592</scope>
    <scope>MUTAGENESIS OF LYS-312; TYR-315 AND THR-592</scope>
    <scope>VARIANT AGS5 548-GLN--MET-626 DEL</scope>
    <scope>CHARACTERIZATION OF VARIANT AGS5 548-GLN--MET-626 DEL</scope>
</reference>
<reference key="38">
    <citation type="journal article" date="2018" name="Nat. Commun.">
        <title>The SAM domain of mouse SAMHD1 is critical for its activation and regulation.</title>
        <authorList>
            <person name="Buzovetsky O."/>
            <person name="Tang C."/>
            <person name="Knecht K.M."/>
            <person name="Antonucci J.M."/>
            <person name="Wu L."/>
            <person name="Ji X."/>
            <person name="Xiong Y."/>
        </authorList>
    </citation>
    <scope>CATALYTIC ACTIVITY</scope>
    <scope>DOMAIN</scope>
    <scope>MUTAGENESIS OF LEU-77; CYS-80 AND HIS-111</scope>
</reference>
<reference key="39">
    <citation type="journal article" date="2019" name="Cell Rep.">
        <title>Conserved Herpesvirus Protein Kinases Target SAMHD1 to Facilitate Virus Replication.</title>
        <authorList>
            <person name="Zhang K."/>
            <person name="Lv D.W."/>
            <person name="Li R."/>
        </authorList>
    </citation>
    <scope>FUNCTION</scope>
    <scope>CATALYTIC ACTIVITY</scope>
    <scope>PHOSPHORYLATION AT THR-592 (MICROBIAL INFECTION)</scope>
</reference>
<reference key="40">
    <citation type="journal article" date="2019" name="Nat. Microbiol.">
        <title>Human cytomegalovirus overcomes SAMHD1 restriction in macrophages via pUL97.</title>
        <authorList>
            <person name="Businger R."/>
            <person name="Deutschmann J."/>
            <person name="Gruska I."/>
            <person name="Milbradt J."/>
            <person name="Wiebusch L."/>
            <person name="Gramberg T."/>
            <person name="Schindler M."/>
        </authorList>
    </citation>
    <scope>FUNCTION</scope>
    <scope>PHOSPHORYLATION AT THR-592 (MICROBIAL INFECTION)</scope>
    <scope>MUTAGENESIS OF THR-592</scope>
</reference>
<reference evidence="50" key="41">
    <citation type="submission" date="2007-07" db="PDB data bank">
        <title>Solution structure of the N-terminal SAM-domain of the SAM domain and HD domain containing protein 1 (dendritic cell-derived IFNG-induced protein) (DCIP) (monocyte protein 5) (MOP-5).</title>
        <authorList>
            <consortium name="RIKEN structural genomics initiative (RSGI)"/>
        </authorList>
    </citation>
    <scope>STRUCTURE BY NMR OF 23-118</scope>
</reference>
<reference evidence="51" key="42">
    <citation type="journal article" date="2011" name="Nature">
        <title>HIV-1 restriction factor SAMHD1 is a deoxynucleoside triphosphate triphosphohydrolase.</title>
        <authorList>
            <person name="Goldstone D.C."/>
            <person name="Ennis-Adeniran V."/>
            <person name="Hedden J.J."/>
            <person name="Groom H.C."/>
            <person name="Rice G.I."/>
            <person name="Christodoulou E."/>
            <person name="Walker P.A."/>
            <person name="Kelly G."/>
            <person name="Haire L.F."/>
            <person name="Yap M.W."/>
            <person name="de Carvalho L.P."/>
            <person name="Stoye J.P."/>
            <person name="Crow Y.J."/>
            <person name="Taylor I.A."/>
            <person name="Webb M."/>
        </authorList>
    </citation>
    <scope>X-RAY CRYSTALLOGRAPHY (3.1 ANGSTROMS) OF 120-626 IN COMPLEX WITH ZINC</scope>
    <scope>CATALYTIC ACTIVITY</scope>
    <scope>ACTIVE SITE</scope>
    <scope>ACTIVITY REGULATION</scope>
    <scope>UBIQUITINATION (MICROBIAL INFECTION)</scope>
    <scope>FUNCTION</scope>
</reference>
<reference evidence="55" key="43">
    <citation type="journal article" date="2013" name="Nat. Commun.">
        <title>Structural insight into dGTP-dependent activation of tetrameric SAMHD1 deoxynucleoside triphosphate triphosphohydrolase.</title>
        <authorList>
            <person name="Zhu C."/>
            <person name="Gao W."/>
            <person name="Zhao K."/>
            <person name="Qin X."/>
            <person name="Zhang Y."/>
            <person name="Peng X."/>
            <person name="Zhang L."/>
            <person name="Dong Y."/>
            <person name="Zhang W."/>
            <person name="Li P."/>
            <person name="Wei W."/>
            <person name="Gong Y."/>
            <person name="Yu X.F."/>
        </authorList>
    </citation>
    <scope>X-RAY CRYSTALLOGRAPHY (1.80 ANGSTROMS) OF 109-626 IN COMPLEX WITH ATP; GTP AND ZINC</scope>
    <scope>SUBUNIT</scope>
    <scope>ACTIVITY REGULATION</scope>
    <scope>CATALYTIC ACTIVITY</scope>
    <scope>MUTAGENESIS OF ASP-137; GLN-142; ARG-145; ARG-333 AND ARG-451</scope>
</reference>
<reference evidence="52 53" key="44">
    <citation type="journal article" date="2013" name="Nat. Struct. Mol. Biol.">
        <title>Mechanism of allosteric activation of SAMHD1 by dGTP.</title>
        <authorList>
            <person name="Ji X."/>
            <person name="Wu Y."/>
            <person name="Yan J."/>
            <person name="Mehrens J."/>
            <person name="Yang H."/>
            <person name="DeLucia M."/>
            <person name="Hao C."/>
            <person name="Gronenborn A.M."/>
            <person name="Skowronski J."/>
            <person name="Ahn J."/>
            <person name="Xiong Y."/>
        </authorList>
    </citation>
    <scope>X-RAY CRYSTALLOGRAPHY (1.83 ANGSTROMS) OF 113-626 OF WILD-TYPE AND INACTIVE MUTANT ARG-206/ASN-207 IN COMPLEXES WITH DGTP; NON-HYDROLYZABLE DGTP; MN(2+) AND MG(2+)</scope>
    <scope>CATALYTIC ACTIVITY</scope>
    <scope>COFACTOR</scope>
    <scope>SUBUNIT</scope>
    <scope>ACTIVITY REGULATION</scope>
    <scope>ACTIVE SITE</scope>
    <scope>MUTAGENESIS OF GLN-149; 206-HIS-ASP-207; LYS-312; TYR-315; ASP-319; ASP-330; ARG-333; ARG-352; ASN-358; ASP-361; HIS-364; ARG-366; HIS-370; TYR-374; HIS-376; LYS-377; LYS-534; VAL-537 AND LEU-540</scope>
</reference>
<reference evidence="56 57 58 59 60 61 62" key="45">
    <citation type="journal article" date="2014" name="J. Biol. Chem.">
        <title>Structural basis of allosteric activation of sterile alpha motif and histidine-aspartate domain-containing protein 1 (SAMHD1) by nucleoside triphosphates.</title>
        <authorList>
            <person name="Koharudin L.M."/>
            <person name="Wu Y."/>
            <person name="DeLucia M."/>
            <person name="Mehrens J."/>
            <person name="Gronenborn A.M."/>
            <person name="Ahn J."/>
        </authorList>
    </citation>
    <scope>X-RAY CRYSTALLOGRAPHY (2.10 ANGSTROMS) OF 113-626 IN COMPLEX WITH GTP AND ZINC</scope>
    <scope>SUBUNIT</scope>
    <scope>ACTIVITY REGULATION</scope>
    <scope>MUTAGENESIS OF ASP-137; GLN-142; ARG-145; GLN-149; HIS-210; HIS-215; HIS-233; ASP-330; ASN-358 AND GLN-375</scope>
</reference>
<reference evidence="54" key="46">
    <citation type="journal article" date="2014" name="Nature">
        <title>Structural basis of lentiviral subversion of a cellular protein degradation pathway.</title>
        <authorList>
            <person name="Schwefel D."/>
            <person name="Groom H.C."/>
            <person name="Boucherit V.C."/>
            <person name="Christodoulou E."/>
            <person name="Walker P.A."/>
            <person name="Stoye J.P."/>
            <person name="Bishop K.N."/>
            <person name="Taylor I.A."/>
        </authorList>
    </citation>
    <scope>X-RAY CRYSTALLOGRAPHY (2.47 ANGSTROMS) OF 582-626 IN COMPLEX WITH DCAF1 AND SIMIAN IMMUNODEFICIENCY VIRUS PROTEIN VPX</scope>
    <scope>UBIQUITINATION (MICROBIAL INFECTION)</scope>
    <scope>FUNCTION</scope>
    <scope>MUTAGENESIS OF ARG-609; ARG-617 AND LYS-622</scope>
</reference>
<reference evidence="68 69 70 71" key="47">
    <citation type="journal article" date="2014" name="Proc. Natl. Acad. Sci. U.S.A.">
        <title>Structural basis of cellular dNTP regulation by SAMHD1.</title>
        <authorList>
            <person name="Ji X."/>
            <person name="Tang C."/>
            <person name="Zhao Q."/>
            <person name="Wang W."/>
            <person name="Xiong Y."/>
        </authorList>
    </citation>
    <scope>X-RAY CRYSTALLOGRAPHY (2.00 ANGSTROMS) OF 113-626 IN COMPLEX WITH DATP; DCTP; DGTP; DTTP AND GTP</scope>
    <scope>SUBUNIT</scope>
    <scope>ACTIVITY REGULATION</scope>
</reference>
<reference evidence="63 64 65 66 67" key="48">
    <citation type="journal article" date="2015" name="Acta Crystallogr. D">
        <title>The mechanism of substrate-controlled allosteric regulation of SAMHD1 activated by GTP.</title>
        <authorList>
            <person name="Zhu C.F."/>
            <person name="Wei W."/>
            <person name="Peng X."/>
            <person name="Dong Y.H."/>
            <person name="Gong Y."/>
            <person name="Yu X.F."/>
        </authorList>
    </citation>
    <scope>X-RAY CRYSTALLOGRAPHY (2.10 ANGSTROMS) OF 109-626 IN COMPLEX WITH GTP AND ZINC</scope>
    <scope>SUBUNIT</scope>
    <scope>ACTIVITY REGULATION</scope>
</reference>
<reference evidence="72 73" key="49">
    <citation type="journal article" date="2015" name="J. Biol. Chem.">
        <title>Impaired dNTPase activity of SAMHD1 by phosphomimetic mutation of Thr-592.</title>
        <authorList>
            <person name="Tang C."/>
            <person name="Ji X."/>
            <person name="Wu L."/>
            <person name="Xiong Y."/>
        </authorList>
    </citation>
    <scope>X-RAY CRYSTALLOGRAPHY (2.30 ANGSTROMS) OF 113-626 OF MUTANT GLU-592 IN COMPLEX WITH GTP</scope>
    <scope>FUNCTION</scope>
    <scope>CATALYTIC ACTIVITY</scope>
    <scope>SUBUNIT</scope>
    <scope>ACTIVITY REGULATION</scope>
    <scope>PHOSPHORYLATION AT THR-592</scope>
    <scope>MUTAGENESIS OF THR-592</scope>
</reference>
<reference evidence="74 75 76 77 78" key="50">
    <citation type="journal article" date="2015" name="PLoS Pathog.">
        <title>Phospho-dependent Regulation of SAMHD1 Oligomerisation Couples Catalysis and Restriction.</title>
        <authorList>
            <person name="Arnold L.H."/>
            <person name="Groom H.C."/>
            <person name="Kunzelmann S."/>
            <person name="Schwefel D."/>
            <person name="Caswell S.J."/>
            <person name="Ordonez P."/>
            <person name="Mann M.C."/>
            <person name="Rueschenbaum S."/>
            <person name="Goldstone D.C."/>
            <person name="Pennell S."/>
            <person name="Howell S.A."/>
            <person name="Stoye J.P."/>
            <person name="Webb M."/>
            <person name="Taylor I.A."/>
            <person name="Bishop K.N."/>
        </authorList>
    </citation>
    <scope>X-RAY CRYSTALLOGRAPHY (2.54 ANGSTROMS) OF 115-583 OF MUTANT ALA-164 IN COMPLEX WITH GTP AND IRON</scope>
    <scope>FUNCTION</scope>
    <scope>CATALYTIC ACTIVITY</scope>
    <scope>COFACTOR</scope>
    <scope>SUBUNIT</scope>
    <scope>ACTIVITY REGULATION</scope>
    <scope>PHOSPHORYLATION AT THR-592</scope>
    <scope>MUTAGENESIS OF ARG-143; ARG-145; ARG-164; HIS-167; HIS-206; ASP-207; HIS-233; ASP-311; TYR-315; HIS-321; ARG-372 AND THR-592</scope>
</reference>
<reference key="51">
    <citation type="journal article" date="2009" name="Nat. Genet.">
        <title>Mutations involved in Aicardi-Goutieres syndrome implicate SAMHD1 as regulator of the innate immune response.</title>
        <authorList>
            <person name="Rice G.I."/>
            <person name="Bond J."/>
            <person name="Asipu A."/>
            <person name="Brunette R.L."/>
            <person name="Manfield I.W."/>
            <person name="Carr I.M."/>
            <person name="Fuller J.C."/>
            <person name="Jackson R.M."/>
            <person name="Lamb T."/>
            <person name="Briggs T.A."/>
            <person name="Ali M."/>
            <person name="Gornall H."/>
            <person name="Couthard L.R."/>
            <person name="Aeby A."/>
            <person name="Attard-Montalto S.P."/>
            <person name="Bertini E."/>
            <person name="Bodemer C."/>
            <person name="Brockmann K."/>
            <person name="Brueton L.A."/>
            <person name="Corry P.C."/>
            <person name="Desguerre I."/>
            <person name="Fazzi E."/>
            <person name="Cazorla A.G."/>
            <person name="Gener B."/>
            <person name="Hamel B.C.J."/>
            <person name="Heiberg A."/>
            <person name="Hunter M."/>
            <person name="van der Knaap M.S."/>
            <person name="Kumar R."/>
            <person name="Lagae L."/>
            <person name="Landrieu P.G."/>
            <person name="Lourenco C.M."/>
            <person name="Marom D."/>
            <person name="McDermott M.F."/>
            <person name="van der Merwe W."/>
            <person name="Orcesi S."/>
            <person name="Prendiville J.S."/>
            <person name="Rasmussen M."/>
            <person name="Shalev S.A."/>
            <person name="Soler D.M."/>
            <person name="Shinawi M."/>
            <person name="Spiegel R."/>
            <person name="Tan T.Y."/>
            <person name="Vanderver A."/>
            <person name="Wakeling E.L."/>
            <person name="Wassmer E."/>
            <person name="Whittaker E."/>
            <person name="Lebon P."/>
            <person name="Stetson D.B."/>
            <person name="Bonthron D.T."/>
            <person name="Crow Y.J."/>
        </authorList>
    </citation>
    <scope>VARIANTS AGS5 PRO-123; CYS-143; HIS-143; GLN-145; ASN-201; SER-209; VAL-254; SER-369 AND VAL-385</scope>
    <scope>FUNCTION</scope>
    <scope>SUBCELLULAR LOCATION</scope>
</reference>
<reference key="52">
    <citation type="journal article" date="2010" name="Arthritis Rheum.">
        <title>Expanding the phenotypic spectrum of lupus erythematosus in Aicardi-Goutieres syndrome.</title>
        <authorList>
            <person name="Ramantani G."/>
            <person name="Kohlhase J."/>
            <person name="Hertzberg C."/>
            <person name="Innes A.M."/>
            <person name="Engel K."/>
            <person name="Hunger S."/>
            <person name="Borozdin W."/>
            <person name="Mah J.K."/>
            <person name="Ungerath K."/>
            <person name="Walkenhorst H."/>
            <person name="Richardt H.H."/>
            <person name="Buckard J."/>
            <person name="Bevot A."/>
            <person name="Siegel C."/>
            <person name="von Stuelpnagel C."/>
            <person name="Ikonomidou C."/>
            <person name="Thomas K."/>
            <person name="Proud V."/>
            <person name="Niemann F."/>
            <person name="Wieczorek D."/>
            <person name="Haeusler M."/>
            <person name="Niggemann P."/>
            <person name="Baltaci V."/>
            <person name="Conrad K."/>
            <person name="Lebon P."/>
            <person name="Lee-Kirsch M.A."/>
        </authorList>
    </citation>
    <scope>VARIANTS AGS5 TYR-167 AND HIS-290</scope>
</reference>
<reference key="53">
    <citation type="journal article" date="2011" name="Am. J. Med. Genet. A">
        <title>Autosomal dominant inheritance of a heterozygous mutation in SAMHD1 causing familial chilblain lupus.</title>
        <authorList>
            <person name="Ravenscroft J.C."/>
            <person name="Suri M."/>
            <person name="Rice G.I."/>
            <person name="Szynkiewicz M."/>
            <person name="Crow Y.J."/>
        </authorList>
    </citation>
    <scope>VARIANT CHBL2 ASN-201</scope>
</reference>
<reference key="54">
    <citation type="journal article" date="2013" name="Lancet Neurol.">
        <title>Assessment of interferon-related biomarkers in Aicardi-Goutieres syndrome associated with mutations in TREX1, RNASEH2A, RNASEH2B, RNASEH2C, SAMHD1, and ADAR: a case-control study.</title>
        <authorList>
            <person name="Rice G.I."/>
            <person name="Forte G.M."/>
            <person name="Szynkiewicz M."/>
            <person name="Chase D.S."/>
            <person name="Aeby A."/>
            <person name="Abdel-Hamid M.S."/>
            <person name="Ackroyd S."/>
            <person name="Allcock R."/>
            <person name="Bailey K.M."/>
            <person name="Balottin U."/>
            <person name="Barnerias C."/>
            <person name="Bernard G."/>
            <person name="Bodemer C."/>
            <person name="Botella M.P."/>
            <person name="Cereda C."/>
            <person name="Chandler K.E."/>
            <person name="Dabydeen L."/>
            <person name="Dale R.C."/>
            <person name="De Laet C."/>
            <person name="De Goede C.G."/>
            <person name="Del Toro M."/>
            <person name="Effat L."/>
            <person name="Enamorado N.N."/>
            <person name="Fazzi E."/>
            <person name="Gener B."/>
            <person name="Haldre M."/>
            <person name="Lin J.P."/>
            <person name="Livingston J.H."/>
            <person name="Lourenco C.M."/>
            <person name="Marques W. Jr."/>
            <person name="Oades P."/>
            <person name="Peterson P."/>
            <person name="Rasmussen M."/>
            <person name="Roubertie A."/>
            <person name="Schmidt J.L."/>
            <person name="Shalev S.A."/>
            <person name="Simon R."/>
            <person name="Spiegel R."/>
            <person name="Swoboda K.J."/>
            <person name="Temtamy S.A."/>
            <person name="Vassallo G."/>
            <person name="Vilain C.N."/>
            <person name="Vogt J."/>
            <person name="Wermenbol V."/>
            <person name="Whitehouse W.P."/>
            <person name="Soler D."/>
            <person name="Olivieri I."/>
            <person name="Orcesi S."/>
            <person name="Aglan M.S."/>
            <person name="Zaki M.S."/>
            <person name="Abdel-Salam G.M."/>
            <person name="Vanderver A."/>
            <person name="Kisand K."/>
            <person name="Rozenberg F."/>
            <person name="Lebon P."/>
            <person name="Crow Y.J."/>
        </authorList>
    </citation>
    <scope>VARIANTS AGS5 120-ASP--HIS-123 DEL; PRO-123; HIS-143; ASN-201; VAL-254; VAL-385 AND THR-448</scope>
</reference>
<accession>Q9Y3Z3</accession>
<accession>B4E2A5</accession>
<accession>E1P5V2</accession>
<accession>Q5JXG8</accession>
<accession>Q8N491</accession>
<accession>Q9H004</accession>
<accession>Q9H005</accession>
<accession>Q9H3U9</accession>
<name>SAMH1_HUMAN</name>
<gene>
    <name evidence="49" type="primary">SAMHD1</name>
    <name evidence="45" type="synonym">MOP5</name>
</gene>
<feature type="chain" id="PRO_0000153732" description="Deoxynucleoside triphosphate triphosphohydrolase SAMHD1">
    <location>
        <begin position="1"/>
        <end position="626"/>
    </location>
</feature>
<feature type="domain" description="SAM" evidence="2">
    <location>
        <begin position="45"/>
        <end position="110"/>
    </location>
</feature>
<feature type="domain" description="HD" evidence="3">
    <location>
        <begin position="164"/>
        <end position="316"/>
    </location>
</feature>
<feature type="region of interest" description="Disordered" evidence="4">
    <location>
        <begin position="1"/>
        <end position="36"/>
    </location>
</feature>
<feature type="compositionally biased region" description="Basic and acidic residues" evidence="4">
    <location>
        <begin position="1"/>
        <end position="19"/>
    </location>
</feature>
<feature type="active site" evidence="47">
    <location>
        <position position="233"/>
    </location>
</feature>
<feature type="binding site" description="in chain B" evidence="27 68 69 70 71">
    <location>
        <position position="116"/>
    </location>
    <ligand>
        <name>GTP</name>
        <dbReference type="ChEBI" id="CHEBI:37565"/>
        <note>allosteric activator; ligand shared between 3 neighboring subunits of the tetramer</note>
    </ligand>
</feature>
<feature type="binding site" description="in chain B" evidence="27 68 69 70 71">
    <location>
        <position position="117"/>
    </location>
    <ligand>
        <name>GTP</name>
        <dbReference type="ChEBI" id="CHEBI:37565"/>
        <note>allosteric activator; ligand shared between 3 neighboring subunits of the tetramer</note>
    </ligand>
</feature>
<feature type="binding site" description="in chain B" evidence="27 70">
    <location>
        <position position="119"/>
    </location>
    <ligand>
        <name>dATP</name>
        <dbReference type="ChEBI" id="CHEBI:61404"/>
        <label>2</label>
        <note>allosteric activator; ligand shared between 3 neighboring subunits of the tetramer</note>
    </ligand>
</feature>
<feature type="binding site" description="in chain B" evidence="27 69">
    <location>
        <position position="119"/>
    </location>
    <ligand>
        <name>dCTP</name>
        <dbReference type="ChEBI" id="CHEBI:61481"/>
        <label>2</label>
        <note>allosteric activator; ligand shared between 3 neighboring subunits of the tetramer</note>
    </ligand>
</feature>
<feature type="binding site" description="in chain B" evidence="22 27 52 71">
    <location>
        <position position="119"/>
    </location>
    <ligand>
        <name>dGTP</name>
        <dbReference type="ChEBI" id="CHEBI:61429"/>
        <label>2</label>
        <note>allosteric activator; ligand shared between 3 neighboring subunits of the tetramer</note>
    </ligand>
</feature>
<feature type="binding site" description="in chain B" evidence="27 69">
    <location>
        <position position="119"/>
    </location>
    <ligand>
        <name>dTTP</name>
        <dbReference type="ChEBI" id="CHEBI:37568"/>
        <label>2</label>
        <note>allosteric activator; ligand shared between 3 neighboring subunits of the tetramer</note>
    </ligand>
</feature>
<feature type="binding site" description="in chain B" evidence="27 68 69 70 71">
    <location>
        <position position="137"/>
    </location>
    <ligand>
        <name>GTP</name>
        <dbReference type="ChEBI" id="CHEBI:37565"/>
        <note>allosteric activator; ligand shared between 3 neighboring subunits of the tetramer</note>
    </ligand>
</feature>
<feature type="binding site" description="in chain B" evidence="27 68 69 70 71">
    <location>
        <position position="142"/>
    </location>
    <ligand>
        <name>GTP</name>
        <dbReference type="ChEBI" id="CHEBI:37565"/>
        <note>allosteric activator; ligand shared between 3 neighboring subunits of the tetramer</note>
    </ligand>
</feature>
<feature type="binding site" description="in chain B" evidence="27 68 69 70 71">
    <location>
        <position position="145"/>
    </location>
    <ligand>
        <name>GTP</name>
        <dbReference type="ChEBI" id="CHEBI:37565"/>
        <note>allosteric activator; ligand shared between 3 neighboring subunits of the tetramer</note>
    </ligand>
</feature>
<feature type="binding site" evidence="27 70">
    <location>
        <position position="149"/>
    </location>
    <ligand>
        <name>dATP</name>
        <dbReference type="ChEBI" id="CHEBI:61404"/>
        <label>1</label>
        <note>substrate</note>
    </ligand>
</feature>
<feature type="binding site" evidence="27 68">
    <location>
        <position position="149"/>
    </location>
    <ligand>
        <name>dCTP</name>
        <dbReference type="ChEBI" id="CHEBI:61481"/>
        <label>1</label>
        <note>substrate</note>
    </ligand>
</feature>
<feature type="binding site" evidence="22 52">
    <location>
        <position position="149"/>
    </location>
    <ligand>
        <name>dGTP</name>
        <dbReference type="ChEBI" id="CHEBI:61429"/>
        <label>1</label>
        <note>substrate</note>
    </ligand>
</feature>
<feature type="binding site" evidence="27 69">
    <location>
        <position position="149"/>
    </location>
    <ligand>
        <name>dTTP</name>
        <dbReference type="ChEBI" id="CHEBI:37568"/>
        <label>1</label>
        <note>substrate</note>
    </ligand>
</feature>
<feature type="binding site" evidence="22 52">
    <location>
        <position position="150"/>
    </location>
    <ligand>
        <name>dGTP</name>
        <dbReference type="ChEBI" id="CHEBI:61429"/>
        <label>1</label>
        <note>substrate</note>
    </ligand>
</feature>
<feature type="binding site" description="in chain C" evidence="27 70">
    <location>
        <position position="156"/>
    </location>
    <ligand>
        <name>dATP</name>
        <dbReference type="ChEBI" id="CHEBI:61404"/>
        <label>2</label>
        <note>allosteric activator; ligand shared between 3 neighboring subunits of the tetramer</note>
    </ligand>
</feature>
<feature type="binding site" description="in chain C" evidence="27 69">
    <location>
        <position position="156"/>
    </location>
    <ligand>
        <name>dCTP</name>
        <dbReference type="ChEBI" id="CHEBI:61481"/>
        <label>2</label>
        <note>allosteric activator; ligand shared between 3 neighboring subunits of the tetramer</note>
    </ligand>
</feature>
<feature type="binding site" description="in chain C" evidence="22 27 52 71">
    <location>
        <position position="156"/>
    </location>
    <ligand>
        <name>dGTP</name>
        <dbReference type="ChEBI" id="CHEBI:61429"/>
        <label>2</label>
        <note>allosteric activator; ligand shared between 3 neighboring subunits of the tetramer</note>
    </ligand>
</feature>
<feature type="binding site" description="in chain C" evidence="27 69">
    <location>
        <position position="156"/>
    </location>
    <ligand>
        <name>dTTP</name>
        <dbReference type="ChEBI" id="CHEBI:37568"/>
        <label>2</label>
        <note>allosteric activator; ligand shared between 3 neighboring subunits of the tetramer</note>
    </ligand>
</feature>
<feature type="binding site" evidence="27 70">
    <location>
        <position position="164"/>
    </location>
    <ligand>
        <name>dATP</name>
        <dbReference type="ChEBI" id="CHEBI:61404"/>
        <label>1</label>
        <note>substrate</note>
    </ligand>
</feature>
<feature type="binding site" evidence="27 68">
    <location>
        <position position="164"/>
    </location>
    <ligand>
        <name>dCTP</name>
        <dbReference type="ChEBI" id="CHEBI:61481"/>
        <label>1</label>
        <note>substrate</note>
    </ligand>
</feature>
<feature type="binding site" evidence="22 52">
    <location>
        <position position="164"/>
    </location>
    <ligand>
        <name>dGTP</name>
        <dbReference type="ChEBI" id="CHEBI:61429"/>
        <label>1</label>
        <note>substrate</note>
    </ligand>
</feature>
<feature type="binding site" evidence="27 69">
    <location>
        <position position="164"/>
    </location>
    <ligand>
        <name>dTTP</name>
        <dbReference type="ChEBI" id="CHEBI:37568"/>
        <label>1</label>
        <note>substrate</note>
    </ligand>
</feature>
<feature type="binding site" evidence="22 52">
    <location>
        <position position="167"/>
    </location>
    <ligand>
        <name>Mn(2+)</name>
        <dbReference type="ChEBI" id="CHEBI:29035"/>
    </ligand>
</feature>
<feature type="binding site" evidence="22 52">
    <location>
        <position position="206"/>
    </location>
    <ligand>
        <name>Mn(2+)</name>
        <dbReference type="ChEBI" id="CHEBI:29035"/>
    </ligand>
</feature>
<feature type="binding site" evidence="22 52">
    <location>
        <position position="207"/>
    </location>
    <ligand>
        <name>Mn(2+)</name>
        <dbReference type="ChEBI" id="CHEBI:29035"/>
    </ligand>
</feature>
<feature type="binding site" evidence="27 70">
    <location>
        <position position="210"/>
    </location>
    <ligand>
        <name>dATP</name>
        <dbReference type="ChEBI" id="CHEBI:61404"/>
        <label>1</label>
        <note>substrate</note>
    </ligand>
</feature>
<feature type="binding site" evidence="27 68">
    <location>
        <position position="210"/>
    </location>
    <ligand>
        <name>dCTP</name>
        <dbReference type="ChEBI" id="CHEBI:61481"/>
        <label>1</label>
        <note>substrate</note>
    </ligand>
</feature>
<feature type="binding site" evidence="27 69">
    <location>
        <position position="210"/>
    </location>
    <ligand>
        <name>dTTP</name>
        <dbReference type="ChEBI" id="CHEBI:37568"/>
        <label>1</label>
        <note>substrate</note>
    </ligand>
</feature>
<feature type="binding site" evidence="27 70">
    <location>
        <position position="215"/>
    </location>
    <ligand>
        <name>dATP</name>
        <dbReference type="ChEBI" id="CHEBI:61404"/>
        <label>1</label>
        <note>substrate</note>
    </ligand>
</feature>
<feature type="binding site" evidence="27 68">
    <location>
        <position position="215"/>
    </location>
    <ligand>
        <name>dCTP</name>
        <dbReference type="ChEBI" id="CHEBI:61481"/>
        <label>1</label>
        <note>substrate</note>
    </ligand>
</feature>
<feature type="binding site" evidence="27 69">
    <location>
        <position position="215"/>
    </location>
    <ligand>
        <name>dTTP</name>
        <dbReference type="ChEBI" id="CHEBI:37568"/>
        <label>1</label>
        <note>substrate</note>
    </ligand>
</feature>
<feature type="binding site" evidence="22 52">
    <location>
        <position position="311"/>
    </location>
    <ligand>
        <name>Mn(2+)</name>
        <dbReference type="ChEBI" id="CHEBI:29035"/>
    </ligand>
</feature>
<feature type="binding site" evidence="27 70">
    <location>
        <position position="312"/>
    </location>
    <ligand>
        <name>dATP</name>
        <dbReference type="ChEBI" id="CHEBI:61404"/>
        <label>1</label>
        <note>substrate</note>
    </ligand>
</feature>
<feature type="binding site" evidence="27 68">
    <location>
        <position position="312"/>
    </location>
    <ligand>
        <name>dCTP</name>
        <dbReference type="ChEBI" id="CHEBI:61481"/>
        <label>1</label>
        <note>substrate</note>
    </ligand>
</feature>
<feature type="binding site" evidence="22 52">
    <location>
        <position position="312"/>
    </location>
    <ligand>
        <name>dGTP</name>
        <dbReference type="ChEBI" id="CHEBI:61429"/>
        <label>1</label>
        <note>substrate</note>
    </ligand>
</feature>
<feature type="binding site" evidence="27 69">
    <location>
        <position position="312"/>
    </location>
    <ligand>
        <name>dTTP</name>
        <dbReference type="ChEBI" id="CHEBI:37568"/>
        <label>1</label>
        <note>substrate</note>
    </ligand>
</feature>
<feature type="binding site" evidence="27 70">
    <location>
        <position position="315"/>
    </location>
    <ligand>
        <name>dATP</name>
        <dbReference type="ChEBI" id="CHEBI:61404"/>
        <label>1</label>
        <note>substrate</note>
    </ligand>
</feature>
<feature type="binding site" evidence="27 68">
    <location>
        <position position="315"/>
    </location>
    <ligand>
        <name>dCTP</name>
        <dbReference type="ChEBI" id="CHEBI:61481"/>
        <label>1</label>
        <note>substrate</note>
    </ligand>
</feature>
<feature type="binding site" evidence="22 52">
    <location>
        <position position="315"/>
    </location>
    <ligand>
        <name>dGTP</name>
        <dbReference type="ChEBI" id="CHEBI:61429"/>
        <label>1</label>
        <note>substrate</note>
    </ligand>
</feature>
<feature type="binding site" evidence="27 69">
    <location>
        <position position="315"/>
    </location>
    <ligand>
        <name>dTTP</name>
        <dbReference type="ChEBI" id="CHEBI:37568"/>
        <label>1</label>
        <note>substrate</note>
    </ligand>
</feature>
<feature type="binding site" evidence="27 70">
    <location>
        <position position="319"/>
    </location>
    <ligand>
        <name>dATP</name>
        <dbReference type="ChEBI" id="CHEBI:61404"/>
        <label>1</label>
        <note>substrate</note>
    </ligand>
</feature>
<feature type="binding site" evidence="27 68">
    <location>
        <position position="319"/>
    </location>
    <ligand>
        <name>dCTP</name>
        <dbReference type="ChEBI" id="CHEBI:61481"/>
        <label>1</label>
        <note>substrate</note>
    </ligand>
</feature>
<feature type="binding site" evidence="22 52">
    <location>
        <position position="319"/>
    </location>
    <ligand>
        <name>dGTP</name>
        <dbReference type="ChEBI" id="CHEBI:61429"/>
        <label>1</label>
        <note>substrate</note>
    </ligand>
</feature>
<feature type="binding site" evidence="27 69">
    <location>
        <position position="319"/>
    </location>
    <ligand>
        <name>dTTP</name>
        <dbReference type="ChEBI" id="CHEBI:37568"/>
        <label>1</label>
        <note>substrate</note>
    </ligand>
</feature>
<feature type="binding site" description="in chain A" evidence="27 70">
    <location>
        <position position="333"/>
    </location>
    <ligand>
        <name>dATP</name>
        <dbReference type="ChEBI" id="CHEBI:61404"/>
        <label>2</label>
        <note>allosteric activator; ligand shared between 3 neighboring subunits of the tetramer</note>
    </ligand>
</feature>
<feature type="binding site" description="in chain A" evidence="27 69">
    <location>
        <position position="333"/>
    </location>
    <ligand>
        <name>dCTP</name>
        <dbReference type="ChEBI" id="CHEBI:61481"/>
        <label>2</label>
        <note>allosteric activator; ligand shared between 3 neighboring subunits of the tetramer</note>
    </ligand>
</feature>
<feature type="binding site" description="in chain A" evidence="22 27 52 71">
    <location>
        <position position="333"/>
    </location>
    <ligand>
        <name>dGTP</name>
        <dbReference type="ChEBI" id="CHEBI:61429"/>
        <label>2</label>
        <note>allosteric activator; ligand shared between 3 neighboring subunits of the tetramer</note>
    </ligand>
</feature>
<feature type="binding site" description="in chain A" evidence="27 69">
    <location>
        <position position="333"/>
    </location>
    <ligand>
        <name>dTTP</name>
        <dbReference type="ChEBI" id="CHEBI:37568"/>
        <label>2</label>
        <note>allosteric activator; ligand shared between 3 neighboring subunits of the tetramer</note>
    </ligand>
</feature>
<feature type="binding site" description="in chain A" evidence="27 70">
    <location>
        <position position="352"/>
    </location>
    <ligand>
        <name>dATP</name>
        <dbReference type="ChEBI" id="CHEBI:61404"/>
        <label>2</label>
        <note>allosteric activator; ligand shared between 3 neighboring subunits of the tetramer</note>
    </ligand>
</feature>
<feature type="binding site" description="in chain A" evidence="27 69">
    <location>
        <position position="352"/>
    </location>
    <ligand>
        <name>dCTP</name>
        <dbReference type="ChEBI" id="CHEBI:61481"/>
        <label>2</label>
        <note>allosteric activator; ligand shared between 3 neighboring subunits of the tetramer</note>
    </ligand>
</feature>
<feature type="binding site" description="in chain A" evidence="22 27 52 71">
    <location>
        <position position="352"/>
    </location>
    <ligand>
        <name>dGTP</name>
        <dbReference type="ChEBI" id="CHEBI:61429"/>
        <label>2</label>
        <note>allosteric activator; ligand shared between 3 neighboring subunits of the tetramer</note>
    </ligand>
</feature>
<feature type="binding site" description="in chain A" evidence="27 69">
    <location>
        <position position="352"/>
    </location>
    <ligand>
        <name>dTTP</name>
        <dbReference type="ChEBI" id="CHEBI:37568"/>
        <label>2</label>
        <note>allosteric activator; ligand shared between 3 neighboring subunits of the tetramer</note>
    </ligand>
</feature>
<feature type="binding site" description="in chain A" evidence="27 70">
    <location>
        <position position="354"/>
    </location>
    <ligand>
        <name>dATP</name>
        <dbReference type="ChEBI" id="CHEBI:61404"/>
        <label>2</label>
        <note>allosteric activator; ligand shared between 3 neighboring subunits of the tetramer</note>
    </ligand>
</feature>
<feature type="binding site" description="in chain A" evidence="27 69">
    <location>
        <position position="354"/>
    </location>
    <ligand>
        <name>dCTP</name>
        <dbReference type="ChEBI" id="CHEBI:61481"/>
        <label>2</label>
        <note>allosteric activator; ligand shared between 3 neighboring subunits of the tetramer</note>
    </ligand>
</feature>
<feature type="binding site" description="in chain A" evidence="22 27 52 71">
    <location>
        <position position="354"/>
    </location>
    <ligand>
        <name>dGTP</name>
        <dbReference type="ChEBI" id="CHEBI:61429"/>
        <label>2</label>
        <note>allosteric activator; ligand shared between 3 neighboring subunits of the tetramer</note>
    </ligand>
</feature>
<feature type="binding site" description="in chain A" evidence="27 69">
    <location>
        <position position="354"/>
    </location>
    <ligand>
        <name>dTTP</name>
        <dbReference type="ChEBI" id="CHEBI:37568"/>
        <label>2</label>
        <note>allosteric activator; ligand shared between 3 neighboring subunits of the tetramer</note>
    </ligand>
</feature>
<feature type="binding site" description="in chain A" evidence="27 70">
    <location>
        <position position="358"/>
    </location>
    <ligand>
        <name>dATP</name>
        <dbReference type="ChEBI" id="CHEBI:61404"/>
        <label>2</label>
        <note>allosteric activator; ligand shared between 3 neighboring subunits of the tetramer</note>
    </ligand>
</feature>
<feature type="binding site" description="in chain A" evidence="22 27 52 71">
    <location>
        <position position="358"/>
    </location>
    <ligand>
        <name>dGTP</name>
        <dbReference type="ChEBI" id="CHEBI:61429"/>
        <label>2</label>
        <note>allosteric activator; ligand shared between 3 neighboring subunits of the tetramer</note>
    </ligand>
</feature>
<feature type="binding site" evidence="27 70">
    <location>
        <position position="366"/>
    </location>
    <ligand>
        <name>dATP</name>
        <dbReference type="ChEBI" id="CHEBI:61404"/>
        <label>1</label>
        <note>substrate</note>
    </ligand>
</feature>
<feature type="binding site" evidence="27 68">
    <location>
        <position position="366"/>
    </location>
    <ligand>
        <name>dCTP</name>
        <dbReference type="ChEBI" id="CHEBI:61481"/>
        <label>1</label>
        <note>substrate</note>
    </ligand>
</feature>
<feature type="binding site" evidence="22 52">
    <location>
        <position position="366"/>
    </location>
    <ligand>
        <name>dGTP</name>
        <dbReference type="ChEBI" id="CHEBI:61429"/>
        <label>1</label>
        <note>substrate</note>
    </ligand>
</feature>
<feature type="binding site" description="in chain C" evidence="27 69">
    <location>
        <position position="372"/>
    </location>
    <ligand>
        <name>dCTP</name>
        <dbReference type="ChEBI" id="CHEBI:61481"/>
        <label>2</label>
        <note>allosteric activator; ligand shared between 3 neighboring subunits of the tetramer</note>
    </ligand>
</feature>
<feature type="binding site" evidence="22 52">
    <location>
        <position position="374"/>
    </location>
    <ligand>
        <name>dGTP</name>
        <dbReference type="ChEBI" id="CHEBI:61429"/>
        <label>1</label>
        <note>substrate</note>
    </ligand>
</feature>
<feature type="binding site" evidence="27 70">
    <location>
        <position position="375"/>
    </location>
    <ligand>
        <name>dATP</name>
        <dbReference type="ChEBI" id="CHEBI:61404"/>
        <label>1</label>
        <note>substrate</note>
    </ligand>
</feature>
<feature type="binding site" evidence="27 68">
    <location>
        <position position="375"/>
    </location>
    <ligand>
        <name>dCTP</name>
        <dbReference type="ChEBI" id="CHEBI:61481"/>
        <label>1</label>
        <note>substrate</note>
    </ligand>
</feature>
<feature type="binding site" evidence="22 52">
    <location>
        <position position="375"/>
    </location>
    <ligand>
        <name>dGTP</name>
        <dbReference type="ChEBI" id="CHEBI:61429"/>
        <label>1</label>
        <note>substrate</note>
    </ligand>
</feature>
<feature type="binding site" evidence="27 69">
    <location>
        <position position="375"/>
    </location>
    <ligand>
        <name>dTTP</name>
        <dbReference type="ChEBI" id="CHEBI:37568"/>
        <label>1</label>
        <note>substrate</note>
    </ligand>
</feature>
<feature type="binding site" description="in chain C" evidence="27 70">
    <location>
        <position position="376"/>
    </location>
    <ligand>
        <name>dATP</name>
        <dbReference type="ChEBI" id="CHEBI:61404"/>
        <label>2</label>
        <note>allosteric activator; ligand shared between 3 neighboring subunits of the tetramer</note>
    </ligand>
</feature>
<feature type="binding site" description="in chain C" evidence="27 69">
    <location>
        <position position="376"/>
    </location>
    <ligand>
        <name>dCTP</name>
        <dbReference type="ChEBI" id="CHEBI:61481"/>
        <label>2</label>
        <note>allosteric activator; ligand shared between 3 neighboring subunits of the tetramer</note>
    </ligand>
</feature>
<feature type="binding site" description="in chain C" evidence="22 27 52 71">
    <location>
        <position position="376"/>
    </location>
    <ligand>
        <name>dGTP</name>
        <dbReference type="ChEBI" id="CHEBI:61429"/>
        <label>2</label>
        <note>allosteric activator; ligand shared between 3 neighboring subunits of the tetramer</note>
    </ligand>
</feature>
<feature type="binding site" description="in chain C" evidence="27 69">
    <location>
        <position position="376"/>
    </location>
    <ligand>
        <name>dTTP</name>
        <dbReference type="ChEBI" id="CHEBI:37568"/>
        <label>2</label>
        <note>allosteric activator; ligand shared between 3 neighboring subunits of the tetramer</note>
    </ligand>
</feature>
<feature type="binding site" description="in chain C" evidence="27 70">
    <location>
        <position position="377"/>
    </location>
    <ligand>
        <name>dATP</name>
        <dbReference type="ChEBI" id="CHEBI:61404"/>
        <label>2</label>
        <note>allosteric activator; ligand shared between 3 neighboring subunits of the tetramer</note>
    </ligand>
</feature>
<feature type="binding site" description="in chain C" evidence="27 69">
    <location>
        <position position="377"/>
    </location>
    <ligand>
        <name>dCTP</name>
        <dbReference type="ChEBI" id="CHEBI:61481"/>
        <label>2</label>
        <note>allosteric activator; ligand shared between 3 neighboring subunits of the tetramer</note>
    </ligand>
</feature>
<feature type="binding site" description="in chain C" evidence="22 27 52 71">
    <location>
        <position position="377"/>
    </location>
    <ligand>
        <name>dGTP</name>
        <dbReference type="ChEBI" id="CHEBI:61429"/>
        <label>2</label>
        <note>allosteric activator; ligand shared between 3 neighboring subunits of the tetramer</note>
    </ligand>
</feature>
<feature type="binding site" description="in chain C" evidence="27 69">
    <location>
        <position position="377"/>
    </location>
    <ligand>
        <name>dTTP</name>
        <dbReference type="ChEBI" id="CHEBI:37568"/>
        <label>2</label>
        <note>allosteric activator; ligand shared between 3 neighboring subunits of the tetramer</note>
    </ligand>
</feature>
<feature type="binding site" description="in chain C" evidence="27 68 69 70 71">
    <location>
        <position position="451"/>
    </location>
    <ligand>
        <name>GTP</name>
        <dbReference type="ChEBI" id="CHEBI:37565"/>
        <note>allosteric activator; ligand shared between 3 neighboring subunits of the tetramer</note>
    </ligand>
</feature>
<feature type="binding site" description="in chain C" evidence="27 68 69 70 71">
    <location>
        <position position="455"/>
    </location>
    <ligand>
        <name>GTP</name>
        <dbReference type="ChEBI" id="CHEBI:37565"/>
        <note>allosteric activator; ligand shared between 3 neighboring subunits of the tetramer</note>
    </ligand>
</feature>
<feature type="binding site" description="in chain A" evidence="27 70">
    <location>
        <position position="523"/>
    </location>
    <ligand>
        <name>dATP</name>
        <dbReference type="ChEBI" id="CHEBI:61404"/>
        <label>2</label>
        <note>allosteric activator; ligand shared between 3 neighboring subunits of the tetramer</note>
    </ligand>
</feature>
<feature type="binding site" description="in chain A" evidence="27 69">
    <location>
        <position position="523"/>
    </location>
    <ligand>
        <name>dCTP</name>
        <dbReference type="ChEBI" id="CHEBI:61481"/>
        <label>2</label>
        <note>allosteric activator; ligand shared between 3 neighboring subunits of the tetramer</note>
    </ligand>
</feature>
<feature type="binding site" description="in chain A" evidence="22 27 52 71">
    <location>
        <position position="523"/>
    </location>
    <ligand>
        <name>dGTP</name>
        <dbReference type="ChEBI" id="CHEBI:61429"/>
        <label>2</label>
        <note>allosteric activator; ligand shared between 3 neighboring subunits of the tetramer</note>
    </ligand>
</feature>
<feature type="binding site" description="in chain A" evidence="27 69">
    <location>
        <position position="523"/>
    </location>
    <ligand>
        <name>dTTP</name>
        <dbReference type="ChEBI" id="CHEBI:37568"/>
        <label>2</label>
        <note>allosteric activator; ligand shared between 3 neighboring subunits of the tetramer</note>
    </ligand>
</feature>
<feature type="binding site" description="in chain A" evidence="27 68 69 70 71">
    <location>
        <position position="523"/>
    </location>
    <ligand>
        <name>GTP</name>
        <dbReference type="ChEBI" id="CHEBI:37565"/>
        <note>allosteric activator; ligand shared between 3 neighboring subunits of the tetramer</note>
    </ligand>
</feature>
<feature type="modified residue" description="N-acetylmethionine" evidence="7 42">
    <location>
        <position position="1"/>
    </location>
</feature>
<feature type="modified residue" description="Phosphoserine" evidence="1">
    <location>
        <position position="18"/>
    </location>
</feature>
<feature type="modified residue" description="Phosphothreonine" evidence="1">
    <location>
        <position position="21"/>
    </location>
</feature>
<feature type="modified residue" description="Phosphothreonine" evidence="1">
    <location>
        <position position="25"/>
    </location>
</feature>
<feature type="modified residue" description="Phosphoserine" evidence="84 85">
    <location>
        <position position="33"/>
    </location>
</feature>
<feature type="modified residue" description="Phosphoserine" evidence="84">
    <location>
        <position position="93"/>
    </location>
</feature>
<feature type="modified residue" description="(Microbial infection) Phosphothreonine" evidence="40 41">
    <location>
        <position position="592"/>
    </location>
</feature>
<feature type="modified residue" description="Phosphothreonine; by CDK1" evidence="18 19 31 32 38 39 79 80 81 82 83 84 85">
    <location>
        <position position="592"/>
    </location>
</feature>
<feature type="cross-link" description="Glycyl lysine isopeptide (Lys-Gly) (interchain with G-Cter in SUMO2)" evidence="86">
    <location>
        <position position="467"/>
    </location>
</feature>
<feature type="cross-link" description="Glycyl lysine isopeptide (Lys-Gly) (interchain with G-Cter in SUMO2)" evidence="86">
    <location>
        <position position="469"/>
    </location>
</feature>
<feature type="cross-link" description="Glycyl lysine isopeptide (Lys-Gly) (interchain with G-Cter in SUMO2)" evidence="86">
    <location>
        <position position="492"/>
    </location>
</feature>
<feature type="cross-link" description="Glycyl lysine isopeptide (Lys-Gly) (interchain with G-Cter in SUMO2)" evidence="86">
    <location>
        <position position="622"/>
    </location>
</feature>
<feature type="splice variant" id="VSP_046561" description="In isoform 3." evidence="46">
    <location>
        <begin position="285"/>
        <end position="354"/>
    </location>
</feature>
<feature type="splice variant" id="VSP_046562" description="In isoform 4." evidence="46">
    <location>
        <begin position="502"/>
        <end position="536"/>
    </location>
</feature>
<feature type="sequence variant" id="VAR_078239" description="In AGS5." evidence="23">
    <location>
        <begin position="120"/>
        <end position="123"/>
    </location>
</feature>
<feature type="sequence variant" id="VAR_058481" description="In AGS5; loss of oligomerization; decreased ability to restrict LINE-1 retrotransposon activity; dbSNP:rs121434520." evidence="8 21 23 34">
    <original>H</original>
    <variation>P</variation>
    <location>
        <position position="123"/>
    </location>
</feature>
<feature type="sequence variant" id="VAR_058482" description="In AGS5; loss of oligomerization; dbSNP:rs387906948." evidence="8 34">
    <original>R</original>
    <variation>C</variation>
    <location>
        <position position="143"/>
    </location>
</feature>
<feature type="sequence variant" id="VAR_058483" description="In AGS5; loss of oligomerization; decreased ability to restrict LINE-1 retrotransposon activity; dbSNP:rs369035155." evidence="8 21 23 34">
    <original>R</original>
    <variation>H</variation>
    <location>
        <position position="143"/>
    </location>
</feature>
<feature type="sequence variant" id="VAR_058484" description="In AGS5; loss of oligomerization; decreased ability to restrict LINE-1 retrotransposon activity; dbSNP:rs515726145." evidence="8 21 34">
    <original>R</original>
    <variation>Q</variation>
    <location>
        <position position="145"/>
    </location>
</feature>
<feature type="sequence variant" id="VAR_070633" description="In AGS5; loss of function in defense response to virus; loss of oligomerization; decreased ability to restrict LINE-1 retrotransposon activity." evidence="9 21 34">
    <original>H</original>
    <variation>Y</variation>
    <location>
        <position position="167"/>
    </location>
</feature>
<feature type="sequence variant" id="VAR_058485" description="In AGS5 and CHBL2; loss of function in defense response to virus; decreased oligomerization; decreased ability to restrict LINE-1 retrotransposon activity; dbSNP:rs138603088." evidence="8 11 21 23 34">
    <original>I</original>
    <variation>N</variation>
    <location>
        <position position="201"/>
    </location>
</feature>
<feature type="sequence variant" id="VAR_058486" description="In AGS5; does not affect oligomerization; decreased ability to restrict LINE-1 retrotransposon activity; does not affect localization to nucleus; dbSNP:rs121434516." evidence="8 21 34">
    <original>G</original>
    <variation>S</variation>
    <location>
        <position position="209"/>
    </location>
</feature>
<feature type="sequence variant" id="VAR_058487" description="In AGS5; loss of function in defense response to virus; does not affect oligomerization; decreased ability to restrict LINE-1 retrotransposon activity; dbSNP:rs121434521." evidence="8 21 23 34">
    <original>M</original>
    <variation>V</variation>
    <location>
        <position position="254"/>
    </location>
</feature>
<feature type="sequence variant" id="VAR_070634" description="In AGS5; loss of oligomerization; decreased ability to restrict LINE-1 retrotransposon activity; dbSNP:rs559553527." evidence="9 21 34">
    <original>R</original>
    <variation>H</variation>
    <location>
        <position position="290"/>
    </location>
</feature>
<feature type="sequence variant" id="VAR_058488" description="In AGS5; loss of function in defense response to virus; decreased oligomerization; dbSNP:rs515726139." evidence="8 34">
    <original>L</original>
    <variation>S</variation>
    <location>
        <position position="369"/>
    </location>
</feature>
<feature type="sequence variant" id="VAR_058489" description="In AGS5; loss of function in defense response to virus; loss of oligomerization; dbSNP:rs515726140." evidence="8 23 34">
    <original>M</original>
    <variation>V</variation>
    <location>
        <position position="385"/>
    </location>
</feature>
<feature type="sequence variant" id="VAR_078240" description="In AGS5; loss of function in defense response to virus; decreased oligomerization; does not affect localization to nucleus; novel localization to the cytoplasm; dbSNP:rs774964432." evidence="23 34">
    <original>I</original>
    <variation>T</variation>
    <location>
        <position position="448"/>
    </location>
</feature>
<feature type="sequence variant" id="VAR_080530" description="In AGS5; Does not affect dNTP regulation, while affecting ability to promote DNA end resection at stalled replication forks." evidence="39">
    <location>
        <begin position="548"/>
        <end position="626"/>
    </location>
</feature>
<feature type="mutagenesis site" description="Increased stability of the tetramer and increased deoxynucleoside triphosphate (dNTPase) activity; when associated with F-77 and F-80 and R-111." evidence="37">
    <original>L</original>
    <variation>F</variation>
    <location>
        <position position="77"/>
    </location>
</feature>
<feature type="mutagenesis site" description="Increased stability of the tetramer and increased deoxynucleoside triphosphate (dNTPase) activity; when associated with F-77 and R-111." evidence="37">
    <original>C</original>
    <variation>F</variation>
    <location>
        <position position="80"/>
    </location>
</feature>
<feature type="mutagenesis site" description="Increased stability of the tetramer and increased deoxynucleoside triphosphate (dNTPase) activity; when associated with F-77 and F-80." evidence="37">
    <original>H</original>
    <variation>R</variation>
    <location>
        <position position="111"/>
    </location>
</feature>
<feature type="mutagenesis site" description="Impairs homotetramerization and nearly abolishes dNTPase activity." evidence="24 26 28">
    <original>D</original>
    <variation>A</variation>
    <location>
        <position position="137"/>
    </location>
</feature>
<feature type="mutagenesis site" description="Impairs homotetramerization and nearly abolishes dNTPase activity; when associated with K-145." evidence="24 28">
    <original>Q</original>
    <variation>E</variation>
    <variation>A</variation>
    <location>
        <position position="142"/>
    </location>
</feature>
<feature type="mutagenesis site" description="Abolished ability to restrict infection by viruses." evidence="32">
    <original>R</original>
    <variation>A</variation>
    <location>
        <position position="143"/>
    </location>
</feature>
<feature type="mutagenesis site" description="Impairs homotetramerization and nearly abolishes dNTPase activity. Abolished ability to restrict infection by viruses." evidence="28 32">
    <original>R</original>
    <variation>A</variation>
    <location>
        <position position="145"/>
    </location>
</feature>
<feature type="mutagenesis site" description="Impairs homotetramerization and nearly abolishes dNTPase activity; when associated with E-145." evidence="24">
    <original>R</original>
    <variation>K</variation>
    <location>
        <position position="145"/>
    </location>
</feature>
<feature type="mutagenesis site" description="Abolished dNTPase activity without affecting homotetramerization. Abolished dNTPase activity; when associated with A-319." evidence="22 28">
    <original>Q</original>
    <variation>A</variation>
    <location>
        <position position="149"/>
    </location>
</feature>
<feature type="mutagenesis site" description="Abolished ability to restrict infection by viruses." evidence="32">
    <original>R</original>
    <variation>A</variation>
    <location>
        <position position="164"/>
    </location>
</feature>
<feature type="mutagenesis site" description="Abolished ability to restrict infection by viruses." evidence="32">
    <original>H</original>
    <variation>A</variation>
    <location>
        <position position="167"/>
    </location>
</feature>
<feature type="mutagenesis site" description="Abolishes zinc binding and dNTPase activity. Does not affect ability to promote DNA end resection at stalled replication forks." evidence="12 19 22 30 35">
    <original>HD</original>
    <variation>RN</variation>
    <location>
        <begin position="206"/>
        <end position="207"/>
    </location>
</feature>
<feature type="mutagenesis site" description="Abolished ability to restrict infection by viruses." evidence="32">
    <original>H</original>
    <variation>A</variation>
    <location>
        <position position="206"/>
    </location>
</feature>
<feature type="mutagenesis site" description="Abolished ability to restrict infection by viruses." evidence="32">
    <original>D</original>
    <variation>A</variation>
    <location>
        <position position="207"/>
    </location>
</feature>
<feature type="mutagenesis site" description="Loss of dNTPase activity." evidence="26 30">
    <original>D</original>
    <variation>N</variation>
    <variation>A</variation>
    <location>
        <position position="207"/>
    </location>
</feature>
<feature type="mutagenesis site" description="Abolished dNTPase activity without affecting homotetramerization." evidence="28">
    <original>H</original>
    <variation>A</variation>
    <location>
        <position position="210"/>
    </location>
</feature>
<feature type="mutagenesis site" description="Abolished dNTPase activity without affecting homotetramerization." evidence="28">
    <original>H</original>
    <variation>A</variation>
    <location>
        <position position="215"/>
    </location>
</feature>
<feature type="mutagenesis site" description="Loss of function in defense response to virus." evidence="34">
    <original>R</original>
    <variation>G</variation>
    <location>
        <position position="226"/>
    </location>
</feature>
<feature type="mutagenesis site" description="Abolished dNTPase activity without affecting homotetramerization. Abolished ability to restrict infection by viruses." evidence="28 32">
    <original>H</original>
    <variation>A</variation>
    <location>
        <position position="233"/>
    </location>
</feature>
<feature type="mutagenesis site" description="Loss of function in defense response to virus. Loss of dNTPase activity. Does not affect oligomerization." evidence="26 32 34">
    <original>D</original>
    <variation>A</variation>
    <location>
        <position position="311"/>
    </location>
</feature>
<feature type="mutagenesis site" description="Abolishes dNTPase activity; when associated with A-315 and A-366. Does not affect ability to promote DNA end resection at stalled replication forks; when associated with A-315." evidence="22 39">
    <original>K</original>
    <variation>A</variation>
    <location>
        <position position="312"/>
    </location>
</feature>
<feature type="mutagenesis site" description="Abolished ability to restrict infection by viruses. Abolishes dNTPase activity; when associated with A-312 and A-366. Does not affect ability to promote DNA end resection at stalled replication forks; when associated with A-312." evidence="22 32 39">
    <original>Y</original>
    <variation>A</variation>
    <location>
        <position position="315"/>
    </location>
</feature>
<feature type="mutagenesis site" description="Abolishes dNTPase activity; when associated with A-149." evidence="22">
    <original>D</original>
    <variation>A</variation>
    <location>
        <position position="319"/>
    </location>
</feature>
<feature type="mutagenesis site" description="Abolished ability to restrict infection by viruses." evidence="32">
    <original>H</original>
    <variation>A</variation>
    <location>
        <position position="321"/>
    </location>
</feature>
<feature type="mutagenesis site" description="Impaired homotetramerization and slightly reduced dNTPase activity. Impaired homotetramerization and reduced dNTPase activity; when associated with A-358." evidence="22 28">
    <original>D</original>
    <variation>A</variation>
    <location>
        <position position="330"/>
    </location>
</feature>
<feature type="mutagenesis site" description="Decreases dNTPase activity. Impairs homotetramerization and nearly abolishes dNTPase activity; when associated with E-451." evidence="22 24">
    <original>R</original>
    <variation>E</variation>
    <location>
        <position position="333"/>
    </location>
</feature>
<feature type="mutagenesis site" description="Impairs homotetramerization and abolishes dNTPase activity; when associated with A-376 and A-377." evidence="22">
    <original>R</original>
    <variation>A</variation>
    <location>
        <position position="352"/>
    </location>
</feature>
<feature type="mutagenesis site" description="Impaired homotetramerization and slightly reduced dNTPase activity. Impaired homotetramerization and reduced dNTPase activity A-330." evidence="22 28">
    <original>N</original>
    <variation>A</variation>
    <location>
        <position position="358"/>
    </location>
</feature>
<feature type="mutagenesis site" description="Impairs homotetramerization and nearly abolishes dNTPase activity; when associated with K-364." evidence="22">
    <original>D</original>
    <variation>R</variation>
    <location>
        <position position="361"/>
    </location>
</feature>
<feature type="mutagenesis site" description="Impairs homotetramerization and nearly abolishes dNTPase activity; when associated with R-361." evidence="22">
    <original>H</original>
    <variation>K</variation>
    <location>
        <position position="364"/>
    </location>
</feature>
<feature type="mutagenesis site" description="Abolishes dNTPase activity; when associated with A-312 and A-315." evidence="22">
    <original>R</original>
    <variation>A</variation>
    <location>
        <position position="366"/>
    </location>
</feature>
<feature type="mutagenesis site" description="Abolishes dNTPase activity; when associated with G-374." evidence="22">
    <original>H</original>
    <variation>A</variation>
    <location>
        <position position="370"/>
    </location>
</feature>
<feature type="mutagenesis site" description="Abolished homotetramerization and dNTPase activity." evidence="32">
    <original>R</original>
    <variation>D</variation>
    <location>
        <position position="372"/>
    </location>
</feature>
<feature type="mutagenesis site" description="Abolishes dNTPase activity; when associated with A-370." evidence="22">
    <original>Y</original>
    <variation>G</variation>
    <location>
        <position position="374"/>
    </location>
</feature>
<feature type="mutagenesis site" description="Abolished dNTPase activity without affecting homotetramerization." evidence="28">
    <original>Q</original>
    <variation>A</variation>
    <location>
        <position position="375"/>
    </location>
</feature>
<feature type="mutagenesis site" description="Impairs homotetramerization and abolishes dNTPase activity; when associated with A-352 and A-377." evidence="22">
    <original>H</original>
    <variation>A</variation>
    <location>
        <position position="376"/>
    </location>
</feature>
<feature type="mutagenesis site" description="Impairs homotetramerization and abolishes dNTPase activity; when associated with A-352 and A-376." evidence="22">
    <original>K</original>
    <variation>A</variation>
    <location>
        <position position="377"/>
    </location>
</feature>
<feature type="mutagenesis site" description="Impairs homotetramerization and abolishes dNTPase activity." evidence="24 30">
    <original>R</original>
    <variation>E</variation>
    <location>
        <position position="451"/>
    </location>
</feature>
<feature type="mutagenesis site" description="Impairs homotetramerization and abolishes dNTPase activity; when associated with A-537 and D-540." evidence="22">
    <original>K</original>
    <variation>A</variation>
    <location>
        <position position="534"/>
    </location>
</feature>
<feature type="mutagenesis site" description="Impairs homotetramerization and abolishes dNTPase activity; when associated with A-534 and D-540." evidence="22">
    <original>V</original>
    <variation>A</variation>
    <location>
        <position position="537"/>
    </location>
</feature>
<feature type="mutagenesis site" description="Impairs homotetramerization and abolishes dNTPase activity; when associated with A-537 and A-534." evidence="22">
    <original>L</original>
    <variation>D</variation>
    <location>
        <position position="540"/>
    </location>
</feature>
<feature type="mutagenesis site" description="Loss of function in defense response to virus. Does not affect oligomerization. Retains dNTPase activity." evidence="30 34">
    <original>Q</original>
    <variation>A</variation>
    <location>
        <position position="548"/>
    </location>
</feature>
<feature type="mutagenesis site" description="Impaired ability to promote DNA end resection at stalled replication forks. Promotes dNTPase activity and ability to restrict infection by viruses." evidence="18 19 31 32 38 39">
    <original>T</original>
    <variation>A</variation>
    <variation>V</variation>
    <location>
        <position position="592"/>
    </location>
</feature>
<feature type="mutagenesis site" description="Loss of phosphorylation by human cytomegalovirus/HCMV kinase UL97." evidence="41">
    <original>T</original>
    <variation>A</variation>
    <location>
        <position position="592"/>
    </location>
</feature>
<feature type="mutagenesis site" description="Mimicks phosphorylation state, retains ability to promote DNA end resection at stalled replication forks. Induces large conformational changes that impair homotetramerization, leading to reduced dNTPase activity and decreased ability to restrict infection by viruses." evidence="18 19 30 31 32 38 39">
    <original>T</original>
    <variation>E</variation>
    <location>
        <position position="592"/>
    </location>
</feature>
<feature type="mutagenesis site" description="Promotes ability to restrict infection by viruses." evidence="18">
    <original>P</original>
    <variation>A</variation>
    <location>
        <position position="593"/>
    </location>
</feature>
<feature type="mutagenesis site" description="Abolishes proteasomal degradation triggered by the viral accessory protein vpx." evidence="25">
    <original>R</original>
    <variation>A</variation>
    <variation>E</variation>
    <location>
        <position position="609"/>
    </location>
</feature>
<feature type="mutagenesis site" description="Abolishes proteasomal degradation triggered by the viral accessory protein vpx." evidence="25">
    <original>R</original>
    <variation>A</variation>
    <variation>E</variation>
    <location>
        <position position="617"/>
    </location>
</feature>
<feature type="mutagenesis site" description="Abolishes proteasomal degradation triggered by the viral accessory protein vpx." evidence="25">
    <original>K</original>
    <variation>A</variation>
    <variation>E</variation>
    <location>
        <position position="622"/>
    </location>
</feature>
<feature type="sequence conflict" description="In Ref. 1; AAF32407 and 3; CAB43368." evidence="46" ref="1 3">
    <original>D</original>
    <variation>G</variation>
    <location>
        <position position="394"/>
    </location>
</feature>
<feature type="sequence conflict" description="In Ref. 7; AAH36450." evidence="46" ref="7">
    <original>G</original>
    <variation>E</variation>
    <location>
        <position position="404"/>
    </location>
</feature>
<feature type="sequence conflict" description="In Ref. 1; AAF32407 and 3; CAB43368." evidence="46" ref="1 3">
    <original>K</original>
    <variation>E</variation>
    <location>
        <position position="494"/>
    </location>
</feature>
<feature type="sequence conflict" description="In Ref. 7; AAH36450." evidence="46" ref="7">
    <original>A</original>
    <variation>V</variation>
    <location>
        <position position="546"/>
    </location>
</feature>
<feature type="helix" evidence="87">
    <location>
        <begin position="42"/>
        <end position="44"/>
    </location>
</feature>
<feature type="helix" evidence="87">
    <location>
        <begin position="46"/>
        <end position="57"/>
    </location>
</feature>
<feature type="helix" evidence="87">
    <location>
        <begin position="62"/>
        <end position="70"/>
    </location>
</feature>
<feature type="turn" evidence="87">
    <location>
        <begin position="75"/>
        <end position="80"/>
    </location>
</feature>
<feature type="helix" evidence="87">
    <location>
        <begin position="83"/>
        <end position="88"/>
    </location>
</feature>
<feature type="helix" evidence="87">
    <location>
        <begin position="94"/>
        <end position="108"/>
    </location>
</feature>
<feature type="turn" evidence="87">
    <location>
        <begin position="109"/>
        <end position="112"/>
    </location>
</feature>
<feature type="strand" evidence="91">
    <location>
        <begin position="116"/>
        <end position="120"/>
    </location>
</feature>
<feature type="turn" evidence="91">
    <location>
        <begin position="121"/>
        <end position="123"/>
    </location>
</feature>
<feature type="strand" evidence="91">
    <location>
        <begin position="124"/>
        <end position="128"/>
    </location>
</feature>
<feature type="helix" evidence="91">
    <location>
        <begin position="130"/>
        <end position="136"/>
    </location>
</feature>
<feature type="helix" evidence="91">
    <location>
        <begin position="139"/>
        <end position="142"/>
    </location>
</feature>
<feature type="helix" evidence="91">
    <location>
        <begin position="143"/>
        <end position="146"/>
    </location>
</feature>
<feature type="strand" evidence="89">
    <location>
        <begin position="147"/>
        <end position="150"/>
    </location>
</feature>
<feature type="helix" evidence="91">
    <location>
        <begin position="151"/>
        <end position="155"/>
    </location>
</feature>
<feature type="helix" evidence="91">
    <location>
        <begin position="164"/>
        <end position="185"/>
    </location>
</feature>
<feature type="helix" evidence="91">
    <location>
        <begin position="187"/>
        <end position="189"/>
    </location>
</feature>
<feature type="helix" evidence="91">
    <location>
        <begin position="193"/>
        <end position="205"/>
    </location>
</feature>
<feature type="turn" evidence="91">
    <location>
        <begin position="206"/>
        <end position="209"/>
    </location>
</feature>
<feature type="turn" evidence="91">
    <location>
        <begin position="212"/>
        <end position="214"/>
    </location>
</feature>
<feature type="helix" evidence="91">
    <location>
        <begin position="215"/>
        <end position="219"/>
    </location>
</feature>
<feature type="helix" evidence="91">
    <location>
        <begin position="221"/>
        <end position="225"/>
    </location>
</feature>
<feature type="strand" evidence="90">
    <location>
        <begin position="227"/>
        <end position="229"/>
    </location>
</feature>
<feature type="helix" evidence="91">
    <location>
        <begin position="233"/>
        <end position="247"/>
    </location>
</feature>
<feature type="helix" evidence="91">
    <location>
        <begin position="250"/>
        <end position="256"/>
    </location>
</feature>
<feature type="helix" evidence="91">
    <location>
        <begin position="261"/>
        <end position="273"/>
    </location>
</feature>
<feature type="strand" evidence="93">
    <location>
        <begin position="276"/>
        <end position="278"/>
    </location>
</feature>
<feature type="strand" evidence="93">
    <location>
        <begin position="281"/>
        <end position="284"/>
    </location>
</feature>
<feature type="strand" evidence="91">
    <location>
        <begin position="288"/>
        <end position="290"/>
    </location>
</feature>
<feature type="helix" evidence="91">
    <location>
        <begin position="292"/>
        <end position="299"/>
    </location>
</feature>
<feature type="strand" evidence="91">
    <location>
        <begin position="300"/>
        <end position="302"/>
    </location>
</feature>
<feature type="turn" evidence="91">
    <location>
        <begin position="304"/>
        <end position="306"/>
    </location>
</feature>
<feature type="helix" evidence="91">
    <location>
        <begin position="310"/>
        <end position="323"/>
    </location>
</feature>
<feature type="helix" evidence="91">
    <location>
        <begin position="331"/>
        <end position="336"/>
    </location>
</feature>
<feature type="strand" evidence="91">
    <location>
        <begin position="338"/>
        <end position="343"/>
    </location>
</feature>
<feature type="strand" evidence="91">
    <location>
        <begin position="346"/>
        <end position="352"/>
    </location>
</feature>
<feature type="helix" evidence="91">
    <location>
        <begin position="353"/>
        <end position="355"/>
    </location>
</feature>
<feature type="helix" evidence="91">
    <location>
        <begin position="356"/>
        <end position="372"/>
    </location>
</feature>
<feature type="turn" evidence="91">
    <location>
        <begin position="373"/>
        <end position="375"/>
    </location>
</feature>
<feature type="helix" evidence="91">
    <location>
        <begin position="377"/>
        <end position="393"/>
    </location>
</feature>
<feature type="turn" evidence="91">
    <location>
        <begin position="394"/>
        <end position="396"/>
    </location>
</feature>
<feature type="strand" evidence="94">
    <location>
        <begin position="398"/>
        <end position="400"/>
    </location>
</feature>
<feature type="helix" evidence="91">
    <location>
        <begin position="402"/>
        <end position="404"/>
    </location>
</feature>
<feature type="strand" evidence="94">
    <location>
        <begin position="406"/>
        <end position="408"/>
    </location>
</feature>
<feature type="turn" evidence="91">
    <location>
        <begin position="409"/>
        <end position="411"/>
    </location>
</feature>
<feature type="helix" evidence="91">
    <location>
        <begin position="412"/>
        <end position="414"/>
    </location>
</feature>
<feature type="helix" evidence="91">
    <location>
        <begin position="416"/>
        <end position="419"/>
    </location>
</feature>
<feature type="helix" evidence="91">
    <location>
        <begin position="425"/>
        <end position="432"/>
    </location>
</feature>
<feature type="helix" evidence="91">
    <location>
        <begin position="436"/>
        <end position="438"/>
    </location>
</feature>
<feature type="helix" evidence="91">
    <location>
        <begin position="439"/>
        <end position="450"/>
    </location>
</feature>
<feature type="strand" evidence="91">
    <location>
        <begin position="455"/>
        <end position="460"/>
    </location>
</feature>
<feature type="strand" evidence="92">
    <location>
        <begin position="464"/>
        <end position="466"/>
    </location>
</feature>
<feature type="helix" evidence="91">
    <location>
        <begin position="470"/>
        <end position="475"/>
    </location>
</feature>
<feature type="helix" evidence="91">
    <location>
        <begin position="476"/>
        <end position="482"/>
    </location>
</feature>
<feature type="helix" evidence="91">
    <location>
        <begin position="495"/>
        <end position="497"/>
    </location>
</feature>
<feature type="strand" evidence="91">
    <location>
        <begin position="498"/>
        <end position="509"/>
    </location>
</feature>
<feature type="helix" evidence="91">
    <location>
        <begin position="514"/>
        <end position="517"/>
    </location>
</feature>
<feature type="strand" evidence="91">
    <location>
        <begin position="520"/>
        <end position="522"/>
    </location>
</feature>
<feature type="strand" evidence="91">
    <location>
        <begin position="525"/>
        <end position="530"/>
    </location>
</feature>
<feature type="helix" evidence="91">
    <location>
        <begin position="534"/>
        <end position="536"/>
    </location>
</feature>
<feature type="strand" evidence="91">
    <location>
        <begin position="541"/>
        <end position="543"/>
    </location>
</feature>
<feature type="strand" evidence="91">
    <location>
        <begin position="545"/>
        <end position="555"/>
    </location>
</feature>
<feature type="helix" evidence="91">
    <location>
        <begin position="559"/>
        <end position="576"/>
    </location>
</feature>
<feature type="helix" evidence="91">
    <location>
        <begin position="584"/>
        <end position="587"/>
    </location>
</feature>
<feature type="turn" evidence="91">
    <location>
        <begin position="589"/>
        <end position="591"/>
    </location>
</feature>
<feature type="helix" evidence="91">
    <location>
        <begin position="592"/>
        <end position="594"/>
    </location>
</feature>
<feature type="helix" evidence="91">
    <location>
        <begin position="596"/>
        <end position="598"/>
    </location>
</feature>
<feature type="helix" evidence="88">
    <location>
        <begin position="611"/>
        <end position="613"/>
    </location>
</feature>
<feature type="helix" evidence="88">
    <location>
        <begin position="617"/>
        <end position="622"/>
    </location>
</feature>
<proteinExistence type="evidence at protein level"/>
<dbReference type="EC" id="3.1.5.-" evidence="14 15 18 24 31 32"/>
<dbReference type="EMBL" id="AF228421">
    <property type="protein sequence ID" value="AAF32407.1"/>
    <property type="molecule type" value="mRNA"/>
</dbReference>
<dbReference type="EMBL" id="AB013847">
    <property type="protein sequence ID" value="BAB18916.1"/>
    <property type="molecule type" value="mRNA"/>
</dbReference>
<dbReference type="EMBL" id="AL050267">
    <property type="protein sequence ID" value="CAB43368.1"/>
    <property type="molecule type" value="mRNA"/>
</dbReference>
<dbReference type="EMBL" id="AK027811">
    <property type="protein sequence ID" value="BAB55386.1"/>
    <property type="molecule type" value="mRNA"/>
</dbReference>
<dbReference type="EMBL" id="AK304187">
    <property type="protein sequence ID" value="BAG65067.1"/>
    <property type="status" value="ALT_SEQ"/>
    <property type="molecule type" value="mRNA"/>
</dbReference>
<dbReference type="EMBL" id="AL079335">
    <property type="status" value="NOT_ANNOTATED_CDS"/>
    <property type="molecule type" value="Genomic_DNA"/>
</dbReference>
<dbReference type="EMBL" id="AL365505">
    <property type="status" value="NOT_ANNOTATED_CDS"/>
    <property type="molecule type" value="Genomic_DNA"/>
</dbReference>
<dbReference type="EMBL" id="CH471077">
    <property type="protein sequence ID" value="EAW76090.1"/>
    <property type="molecule type" value="Genomic_DNA"/>
</dbReference>
<dbReference type="EMBL" id="CH471077">
    <property type="protein sequence ID" value="EAW76091.1"/>
    <property type="molecule type" value="Genomic_DNA"/>
</dbReference>
<dbReference type="EMBL" id="BC036450">
    <property type="protein sequence ID" value="AAH36450.1"/>
    <property type="molecule type" value="mRNA"/>
</dbReference>
<dbReference type="CCDS" id="CCDS13288.1">
    <molecule id="Q9Y3Z3-1"/>
</dbReference>
<dbReference type="CCDS" id="CCDS86953.1">
    <molecule id="Q9Y3Z3-4"/>
</dbReference>
<dbReference type="PIR" id="T08686">
    <property type="entry name" value="T08686"/>
</dbReference>
<dbReference type="RefSeq" id="NP_001350658.1">
    <molecule id="Q9Y3Z3-4"/>
    <property type="nucleotide sequence ID" value="NM_001363729.2"/>
</dbReference>
<dbReference type="RefSeq" id="NP_056289.2">
    <molecule id="Q9Y3Z3-1"/>
    <property type="nucleotide sequence ID" value="NM_015474.3"/>
</dbReference>
<dbReference type="RefSeq" id="XP_005260441.1">
    <property type="nucleotide sequence ID" value="XM_005260384.3"/>
</dbReference>
<dbReference type="PDB" id="2E8O">
    <property type="method" value="NMR"/>
    <property type="chains" value="A=23-118"/>
</dbReference>
<dbReference type="PDB" id="3U1N">
    <property type="method" value="X-ray"/>
    <property type="resolution" value="3.10 A"/>
    <property type="chains" value="A/B/C/D=120-626"/>
</dbReference>
<dbReference type="PDB" id="4BZB">
    <property type="method" value="X-ray"/>
    <property type="resolution" value="1.83 A"/>
    <property type="chains" value="A/B/C/D=113-626"/>
</dbReference>
<dbReference type="PDB" id="4BZC">
    <property type="method" value="X-ray"/>
    <property type="resolution" value="2.88 A"/>
    <property type="chains" value="A/B/C/D=113-626"/>
</dbReference>
<dbReference type="PDB" id="4CC9">
    <property type="method" value="X-ray"/>
    <property type="resolution" value="2.47 A"/>
    <property type="chains" value="C=582-626"/>
</dbReference>
<dbReference type="PDB" id="4MZ7">
    <property type="method" value="X-ray"/>
    <property type="resolution" value="1.80 A"/>
    <property type="chains" value="A/B=109-626"/>
</dbReference>
<dbReference type="PDB" id="4Q7H">
    <property type="method" value="X-ray"/>
    <property type="resolution" value="2.59 A"/>
    <property type="chains" value="A/B/C/D=109-626"/>
</dbReference>
<dbReference type="PDB" id="4QFX">
    <property type="method" value="X-ray"/>
    <property type="resolution" value="2.20 A"/>
    <property type="chains" value="A/B/C/D=113-626"/>
</dbReference>
<dbReference type="PDB" id="4QFY">
    <property type="method" value="X-ray"/>
    <property type="resolution" value="2.10 A"/>
    <property type="chains" value="A/B/C/D=113-626"/>
</dbReference>
<dbReference type="PDB" id="4QFZ">
    <property type="method" value="X-ray"/>
    <property type="resolution" value="2.30 A"/>
    <property type="chains" value="A/B/C/D=113-626"/>
</dbReference>
<dbReference type="PDB" id="4QG0">
    <property type="method" value="X-ray"/>
    <property type="resolution" value="2.30 A"/>
    <property type="chains" value="A/B/C/D=113-626"/>
</dbReference>
<dbReference type="PDB" id="4QG1">
    <property type="method" value="X-ray"/>
    <property type="resolution" value="2.20 A"/>
    <property type="chains" value="A/B/C/D=113-626"/>
</dbReference>
<dbReference type="PDB" id="4QG2">
    <property type="method" value="X-ray"/>
    <property type="resolution" value="2.25 A"/>
    <property type="chains" value="A/B/C/D=113-626"/>
</dbReference>
<dbReference type="PDB" id="4QG4">
    <property type="method" value="X-ray"/>
    <property type="resolution" value="2.10 A"/>
    <property type="chains" value="A/B/C/D=113-626"/>
</dbReference>
<dbReference type="PDB" id="4RXO">
    <property type="method" value="X-ray"/>
    <property type="resolution" value="2.60 A"/>
    <property type="chains" value="A/B/C/D=109-626"/>
</dbReference>
<dbReference type="PDB" id="4RXP">
    <property type="method" value="X-ray"/>
    <property type="resolution" value="2.10 A"/>
    <property type="chains" value="A/B=109-626"/>
</dbReference>
<dbReference type="PDB" id="4RXQ">
    <property type="method" value="X-ray"/>
    <property type="resolution" value="2.10 A"/>
    <property type="chains" value="A/B=109-626"/>
</dbReference>
<dbReference type="PDB" id="4RXR">
    <property type="method" value="X-ray"/>
    <property type="resolution" value="2.12 A"/>
    <property type="chains" value="A/B=109-626"/>
</dbReference>
<dbReference type="PDB" id="4RXS">
    <property type="method" value="X-ray"/>
    <property type="resolution" value="2.20 A"/>
    <property type="chains" value="A/B=109-626"/>
</dbReference>
<dbReference type="PDB" id="4TNP">
    <property type="method" value="X-ray"/>
    <property type="resolution" value="2.00 A"/>
    <property type="chains" value="A/B/C/D=113-626"/>
</dbReference>
<dbReference type="PDB" id="4TNQ">
    <property type="method" value="X-ray"/>
    <property type="resolution" value="2.55 A"/>
    <property type="chains" value="A/B/C/D=113-626"/>
</dbReference>
<dbReference type="PDB" id="4TNR">
    <property type="method" value="X-ray"/>
    <property type="resolution" value="2.75 A"/>
    <property type="chains" value="A/B/C/D=113-626"/>
</dbReference>
<dbReference type="PDB" id="4TNX">
    <property type="method" value="X-ray"/>
    <property type="resolution" value="2.31 A"/>
    <property type="chains" value="A/B/C/D=113-626"/>
</dbReference>
<dbReference type="PDB" id="4TNY">
    <property type="method" value="X-ray"/>
    <property type="resolution" value="2.60 A"/>
    <property type="chains" value="A/B/C/D=113-626"/>
</dbReference>
<dbReference type="PDB" id="4TNZ">
    <property type="method" value="X-ray"/>
    <property type="resolution" value="2.38 A"/>
    <property type="chains" value="A/B/C/D=113-626"/>
</dbReference>
<dbReference type="PDB" id="4TO0">
    <property type="method" value="X-ray"/>
    <property type="resolution" value="2.30 A"/>
    <property type="chains" value="A/B/C/D=113-626"/>
</dbReference>
<dbReference type="PDB" id="4TO1">
    <property type="method" value="X-ray"/>
    <property type="resolution" value="2.55 A"/>
    <property type="chains" value="A/B/C/D=113-626"/>
</dbReference>
<dbReference type="PDB" id="4TO2">
    <property type="method" value="X-ray"/>
    <property type="resolution" value="2.27 A"/>
    <property type="chains" value="A/B/C/D=113-626"/>
</dbReference>
<dbReference type="PDB" id="4TO3">
    <property type="method" value="X-ray"/>
    <property type="resolution" value="2.20 A"/>
    <property type="chains" value="A/B/C/D=113-626"/>
</dbReference>
<dbReference type="PDB" id="4TO4">
    <property type="method" value="X-ray"/>
    <property type="resolution" value="2.10 A"/>
    <property type="chains" value="A/B/C/D=113-626"/>
</dbReference>
<dbReference type="PDB" id="4TO5">
    <property type="method" value="X-ray"/>
    <property type="resolution" value="2.80 A"/>
    <property type="chains" value="A/B/C/D=113-626"/>
</dbReference>
<dbReference type="PDB" id="4TO6">
    <property type="method" value="X-ray"/>
    <property type="resolution" value="2.33 A"/>
    <property type="chains" value="A/B/C/D=113-626"/>
</dbReference>
<dbReference type="PDB" id="4ZWE">
    <property type="method" value="X-ray"/>
    <property type="resolution" value="2.81 A"/>
    <property type="chains" value="A/B/C/D=113-626"/>
</dbReference>
<dbReference type="PDB" id="4ZWG">
    <property type="method" value="X-ray"/>
    <property type="resolution" value="2.30 A"/>
    <property type="chains" value="A/B/C/D=113-626"/>
</dbReference>
<dbReference type="PDB" id="5AO0">
    <property type="method" value="X-ray"/>
    <property type="resolution" value="3.73 A"/>
    <property type="chains" value="A/B=41-583"/>
</dbReference>
<dbReference type="PDB" id="5AO1">
    <property type="method" value="X-ray"/>
    <property type="resolution" value="2.54 A"/>
    <property type="chains" value="A/B/C/D=115-583"/>
</dbReference>
<dbReference type="PDB" id="5AO2">
    <property type="method" value="X-ray"/>
    <property type="resolution" value="2.97 A"/>
    <property type="chains" value="A/B/C/D=115-583"/>
</dbReference>
<dbReference type="PDB" id="5AO3">
    <property type="method" value="X-ray"/>
    <property type="resolution" value="3.00 A"/>
    <property type="chains" value="A/B/C/D=115-626"/>
</dbReference>
<dbReference type="PDB" id="5AO4">
    <property type="method" value="X-ray"/>
    <property type="resolution" value="3.70 A"/>
    <property type="chains" value="A/B/C/D=115-626"/>
</dbReference>
<dbReference type="PDB" id="6CM2">
    <property type="method" value="X-ray"/>
    <property type="resolution" value="2.14 A"/>
    <property type="chains" value="A/B/C/D=113-626"/>
</dbReference>
<dbReference type="PDB" id="6DW3">
    <property type="method" value="X-ray"/>
    <property type="resolution" value="2.20 A"/>
    <property type="chains" value="A/B/C/D=113-626"/>
</dbReference>
<dbReference type="PDB" id="6DW4">
    <property type="method" value="X-ray"/>
    <property type="resolution" value="1.99 A"/>
    <property type="chains" value="A/B/C/D=113-626"/>
</dbReference>
<dbReference type="PDB" id="6DW5">
    <property type="method" value="X-ray"/>
    <property type="resolution" value="1.93 A"/>
    <property type="chains" value="A/B/C/D=113-626"/>
</dbReference>
<dbReference type="PDB" id="6DW7">
    <property type="method" value="X-ray"/>
    <property type="resolution" value="2.50 A"/>
    <property type="chains" value="A/B/C/D=113-626"/>
</dbReference>
<dbReference type="PDB" id="6DWD">
    <property type="method" value="X-ray"/>
    <property type="resolution" value="1.70 A"/>
    <property type="chains" value="A/B/C/D=113-626"/>
</dbReference>
<dbReference type="PDB" id="6DWJ">
    <property type="method" value="X-ray"/>
    <property type="resolution" value="2.50 A"/>
    <property type="chains" value="A/B/C/D=113-626"/>
</dbReference>
<dbReference type="PDB" id="6DWK">
    <property type="method" value="X-ray"/>
    <property type="resolution" value="2.30 A"/>
    <property type="chains" value="A/B/C/D=113-626"/>
</dbReference>
<dbReference type="PDB" id="6TX0">
    <property type="method" value="X-ray"/>
    <property type="resolution" value="2.01 A"/>
    <property type="chains" value="A/B=109-626"/>
</dbReference>
<dbReference type="PDB" id="6TXA">
    <property type="method" value="X-ray"/>
    <property type="resolution" value="2.85 A"/>
    <property type="chains" value="A/B/C/D/E/F/G/H/I/J/K/L/M/N/O/P=109-626"/>
</dbReference>
<dbReference type="PDB" id="6TXC">
    <property type="method" value="X-ray"/>
    <property type="resolution" value="2.84 A"/>
    <property type="chains" value="A/B/C/D/E/F/G/H/I/J/K/L/M/N/O/P=109-626"/>
</dbReference>
<dbReference type="PDB" id="6TXE">
    <property type="method" value="X-ray"/>
    <property type="resolution" value="3.19 A"/>
    <property type="chains" value="A/B/C/D/E/F/G/H/I/J/K/L/M/N/O/P=109-626"/>
</dbReference>
<dbReference type="PDB" id="6TXF">
    <property type="method" value="X-ray"/>
    <property type="resolution" value="2.25 A"/>
    <property type="chains" value="A/B=109-626"/>
</dbReference>
<dbReference type="PDB" id="6U6X">
    <property type="method" value="X-ray"/>
    <property type="resolution" value="2.58 A"/>
    <property type="chains" value="A/B/C/D=114-626"/>
</dbReference>
<dbReference type="PDB" id="6U6Y">
    <property type="method" value="X-ray"/>
    <property type="resolution" value="2.47 A"/>
    <property type="chains" value="A/B/C/D=114-626"/>
</dbReference>
<dbReference type="PDB" id="6U6Z">
    <property type="method" value="X-ray"/>
    <property type="resolution" value="2.10 A"/>
    <property type="chains" value="A/B/C/D=116-626"/>
</dbReference>
<dbReference type="PDB" id="6XU1">
    <property type="method" value="X-ray"/>
    <property type="resolution" value="2.20 A"/>
    <property type="chains" value="A/B/C/D/E/F/G/H=109-626"/>
</dbReference>
<dbReference type="PDB" id="6YOM">
    <property type="method" value="X-ray"/>
    <property type="resolution" value="3.25 A"/>
    <property type="chains" value="A/B=109-626"/>
</dbReference>
<dbReference type="PDB" id="7A5Y">
    <property type="method" value="X-ray"/>
    <property type="resolution" value="2.29 A"/>
    <property type="chains" value="A/B/C/D/E/F/G/H=109-626"/>
</dbReference>
<dbReference type="PDB" id="7LTT">
    <property type="method" value="X-ray"/>
    <property type="resolution" value="1.90 A"/>
    <property type="chains" value="A/B/C/D=113-626"/>
</dbReference>
<dbReference type="PDB" id="7LU5">
    <property type="method" value="X-ray"/>
    <property type="resolution" value="3.57 A"/>
    <property type="chains" value="A/B/C/D/E/F/G/H/I/J/K/L/M/N/O/P=113-626"/>
</dbReference>
<dbReference type="PDB" id="7S2Y">
    <property type="method" value="X-ray"/>
    <property type="resolution" value="2.80 A"/>
    <property type="chains" value="A/B/C/D=113-626"/>
</dbReference>
<dbReference type="PDB" id="7UJN">
    <property type="method" value="EM"/>
    <property type="resolution" value="2.89 A"/>
    <property type="chains" value="A/B/C/D=1-626"/>
</dbReference>
<dbReference type="PDB" id="8D94">
    <property type="method" value="X-ray"/>
    <property type="resolution" value="2.44 A"/>
    <property type="chains" value="A/B/C/D=1-626"/>
</dbReference>
<dbReference type="PDB" id="8D9J">
    <property type="method" value="X-ray"/>
    <property type="resolution" value="2.82 A"/>
    <property type="chains" value="A/B/C/D=1-626"/>
</dbReference>
<dbReference type="PDB" id="8GB1">
    <property type="method" value="X-ray"/>
    <property type="resolution" value="2.46 A"/>
    <property type="chains" value="A/B/C/D=113-626"/>
</dbReference>
<dbReference type="PDB" id="8GB2">
    <property type="method" value="X-ray"/>
    <property type="resolution" value="3.07 A"/>
    <property type="chains" value="A/B/C/D=113-626"/>
</dbReference>
<dbReference type="PDB" id="8QXJ">
    <property type="method" value="EM"/>
    <property type="resolution" value="2.65 A"/>
    <property type="chains" value="A/B/C/D=1-626"/>
</dbReference>
<dbReference type="PDB" id="8QXK">
    <property type="method" value="EM"/>
    <property type="resolution" value="2.66 A"/>
    <property type="chains" value="A/B/C/D=1-626"/>
</dbReference>
<dbReference type="PDB" id="8QXL">
    <property type="method" value="EM"/>
    <property type="resolution" value="2.82 A"/>
    <property type="chains" value="A/B/C/D=1-626"/>
</dbReference>
<dbReference type="PDB" id="8QXM">
    <property type="method" value="EM"/>
    <property type="resolution" value="2.94 A"/>
    <property type="chains" value="A/B/C/D=1-626"/>
</dbReference>
<dbReference type="PDB" id="8QXN">
    <property type="method" value="EM"/>
    <property type="resolution" value="2.98 A"/>
    <property type="chains" value="A/B/C/D=1-626"/>
</dbReference>
<dbReference type="PDB" id="8QXO">
    <property type="method" value="EM"/>
    <property type="resolution" value="3.43 A"/>
    <property type="chains" value="A/B/C/D=1-626"/>
</dbReference>
<dbReference type="PDB" id="8TDV">
    <property type="method" value="EM"/>
    <property type="resolution" value="3.44 A"/>
    <property type="chains" value="A/B/E/F=1-626"/>
</dbReference>
<dbReference type="PDB" id="8TDW">
    <property type="method" value="EM"/>
    <property type="resolution" value="3.04 A"/>
    <property type="chains" value="A/B/E/F=1-626"/>
</dbReference>
<dbReference type="PDB" id="9EC2">
    <property type="method" value="X-ray"/>
    <property type="resolution" value="2.72 A"/>
    <property type="chains" value="A/B/C/D=113-626"/>
</dbReference>
<dbReference type="PDBsum" id="2E8O"/>
<dbReference type="PDBsum" id="3U1N"/>
<dbReference type="PDBsum" id="4BZB"/>
<dbReference type="PDBsum" id="4BZC"/>
<dbReference type="PDBsum" id="4CC9"/>
<dbReference type="PDBsum" id="4MZ7"/>
<dbReference type="PDBsum" id="4Q7H"/>
<dbReference type="PDBsum" id="4QFX"/>
<dbReference type="PDBsum" id="4QFY"/>
<dbReference type="PDBsum" id="4QFZ"/>
<dbReference type="PDBsum" id="4QG0"/>
<dbReference type="PDBsum" id="4QG1"/>
<dbReference type="PDBsum" id="4QG2"/>
<dbReference type="PDBsum" id="4QG4"/>
<dbReference type="PDBsum" id="4RXO"/>
<dbReference type="PDBsum" id="4RXP"/>
<dbReference type="PDBsum" id="4RXQ"/>
<dbReference type="PDBsum" id="4RXR"/>
<dbReference type="PDBsum" id="4RXS"/>
<dbReference type="PDBsum" id="4TNP"/>
<dbReference type="PDBsum" id="4TNQ"/>
<dbReference type="PDBsum" id="4TNR"/>
<dbReference type="PDBsum" id="4TNX"/>
<dbReference type="PDBsum" id="4TNY"/>
<dbReference type="PDBsum" id="4TNZ"/>
<dbReference type="PDBsum" id="4TO0"/>
<dbReference type="PDBsum" id="4TO1"/>
<dbReference type="PDBsum" id="4TO2"/>
<dbReference type="PDBsum" id="4TO3"/>
<dbReference type="PDBsum" id="4TO4"/>
<dbReference type="PDBsum" id="4TO5"/>
<dbReference type="PDBsum" id="4TO6"/>
<dbReference type="PDBsum" id="4ZWE"/>
<dbReference type="PDBsum" id="4ZWG"/>
<dbReference type="PDBsum" id="5AO0"/>
<dbReference type="PDBsum" id="5AO1"/>
<dbReference type="PDBsum" id="5AO2"/>
<dbReference type="PDBsum" id="5AO3"/>
<dbReference type="PDBsum" id="5AO4"/>
<dbReference type="PDBsum" id="6CM2"/>
<dbReference type="PDBsum" id="6DW3"/>
<dbReference type="PDBsum" id="6DW4"/>
<dbReference type="PDBsum" id="6DW5"/>
<dbReference type="PDBsum" id="6DW7"/>
<dbReference type="PDBsum" id="6DWD"/>
<dbReference type="PDBsum" id="6DWJ"/>
<dbReference type="PDBsum" id="6DWK"/>
<dbReference type="PDBsum" id="6TX0"/>
<dbReference type="PDBsum" id="6TXA"/>
<dbReference type="PDBsum" id="6TXC"/>
<dbReference type="PDBsum" id="6TXE"/>
<dbReference type="PDBsum" id="6TXF"/>
<dbReference type="PDBsum" id="6U6X"/>
<dbReference type="PDBsum" id="6U6Y"/>
<dbReference type="PDBsum" id="6U6Z"/>
<dbReference type="PDBsum" id="6XU1"/>
<dbReference type="PDBsum" id="6YOM"/>
<dbReference type="PDBsum" id="7A5Y"/>
<dbReference type="PDBsum" id="7LTT"/>
<dbReference type="PDBsum" id="7LU5"/>
<dbReference type="PDBsum" id="7S2Y"/>
<dbReference type="PDBsum" id="7UJN"/>
<dbReference type="PDBsum" id="8D94"/>
<dbReference type="PDBsum" id="8D9J"/>
<dbReference type="PDBsum" id="8GB1"/>
<dbReference type="PDBsum" id="8GB2"/>
<dbReference type="PDBsum" id="8QXJ"/>
<dbReference type="PDBsum" id="8QXK"/>
<dbReference type="PDBsum" id="8QXL"/>
<dbReference type="PDBsum" id="8QXM"/>
<dbReference type="PDBsum" id="8QXN"/>
<dbReference type="PDBsum" id="8QXO"/>
<dbReference type="PDBsum" id="8TDV"/>
<dbReference type="PDBsum" id="8TDW"/>
<dbReference type="PDBsum" id="9EC2"/>
<dbReference type="EMDB" id="EMD-18729"/>
<dbReference type="EMDB" id="EMD-18730"/>
<dbReference type="EMDB" id="EMD-18731"/>
<dbReference type="EMDB" id="EMD-18732"/>
<dbReference type="EMDB" id="EMD-18733"/>
<dbReference type="EMDB" id="EMD-18734"/>
<dbReference type="EMDB" id="EMD-26567"/>
<dbReference type="EMDB" id="EMD-41174"/>
<dbReference type="EMDB" id="EMD-41175"/>
<dbReference type="SMR" id="Q9Y3Z3"/>
<dbReference type="BioGRID" id="117436">
    <property type="interactions" value="212"/>
</dbReference>
<dbReference type="DIP" id="DIP-50704N"/>
<dbReference type="FunCoup" id="Q9Y3Z3">
    <property type="interactions" value="1199"/>
</dbReference>
<dbReference type="IntAct" id="Q9Y3Z3">
    <property type="interactions" value="76"/>
</dbReference>
<dbReference type="MINT" id="Q9Y3Z3"/>
<dbReference type="STRING" id="9606.ENSP00000493536"/>
<dbReference type="ChEMBL" id="CHEMBL4523507"/>
<dbReference type="CarbonylDB" id="Q9Y3Z3"/>
<dbReference type="GlyCosmos" id="Q9Y3Z3">
    <property type="glycosylation" value="3 sites, 1 glycan"/>
</dbReference>
<dbReference type="GlyGen" id="Q9Y3Z3">
    <property type="glycosylation" value="4 sites, 1 O-linked glycan (4 sites)"/>
</dbReference>
<dbReference type="iPTMnet" id="Q9Y3Z3"/>
<dbReference type="PhosphoSitePlus" id="Q9Y3Z3"/>
<dbReference type="SwissPalm" id="Q9Y3Z3"/>
<dbReference type="BioMuta" id="SAMHD1"/>
<dbReference type="DMDM" id="22257047"/>
<dbReference type="CPTAC" id="CPTAC-945"/>
<dbReference type="jPOST" id="Q9Y3Z3"/>
<dbReference type="MassIVE" id="Q9Y3Z3"/>
<dbReference type="PaxDb" id="9606-ENSP00000262878"/>
<dbReference type="PeptideAtlas" id="Q9Y3Z3"/>
<dbReference type="ProteomicsDB" id="86088">
    <molecule id="Q9Y3Z3-1"/>
</dbReference>
<dbReference type="Pumba" id="Q9Y3Z3"/>
<dbReference type="Antibodypedia" id="26616">
    <property type="antibodies" value="503 antibodies from 36 providers"/>
</dbReference>
<dbReference type="DNASU" id="25939"/>
<dbReference type="Ensembl" id="ENST00000262878.5">
    <molecule id="Q9Y3Z3-4"/>
    <property type="protein sequence ID" value="ENSP00000262878.5"/>
    <property type="gene ID" value="ENSG00000101347.11"/>
</dbReference>
<dbReference type="Ensembl" id="ENST00000644250.2">
    <molecule id="Q9Y3Z3-4"/>
    <property type="protein sequence ID" value="ENSP00000493810.2"/>
    <property type="gene ID" value="ENSG00000101347.11"/>
</dbReference>
<dbReference type="Ensembl" id="ENST00000646066.1">
    <molecule id="Q9Y3Z3-3"/>
    <property type="protein sequence ID" value="ENSP00000495432.1"/>
    <property type="gene ID" value="ENSG00000101347.11"/>
</dbReference>
<dbReference type="Ensembl" id="ENST00000646673.2">
    <molecule id="Q9Y3Z3-1"/>
    <property type="protein sequence ID" value="ENSP00000493536.2"/>
    <property type="gene ID" value="ENSG00000101347.11"/>
</dbReference>
<dbReference type="Ensembl" id="ENST00000646869.1">
    <molecule id="Q9Y3Z3-1"/>
    <property type="protein sequence ID" value="ENSP00000495667.1"/>
    <property type="gene ID" value="ENSG00000101347.11"/>
</dbReference>
<dbReference type="Ensembl" id="ENST00000682773.1">
    <molecule id="Q9Y3Z3-1"/>
    <property type="protein sequence ID" value="ENSP00000507178.1"/>
    <property type="gene ID" value="ENSG00000101347.11"/>
</dbReference>
<dbReference type="Ensembl" id="ENST00000683766.1">
    <molecule id="Q9Y3Z3-1"/>
    <property type="protein sequence ID" value="ENSP00000506877.1"/>
    <property type="gene ID" value="ENSG00000101347.11"/>
</dbReference>
<dbReference type="GeneID" id="25939"/>
<dbReference type="KEGG" id="hsa:25939"/>
<dbReference type="MANE-Select" id="ENST00000646673.2">
    <property type="protein sequence ID" value="ENSP00000493536.2"/>
    <property type="RefSeq nucleotide sequence ID" value="NM_015474.4"/>
    <property type="RefSeq protein sequence ID" value="NP_056289.2"/>
</dbReference>
<dbReference type="UCSC" id="uc002xgh.3">
    <molecule id="Q9Y3Z3-1"/>
    <property type="organism name" value="human"/>
</dbReference>
<dbReference type="AGR" id="HGNC:15925"/>
<dbReference type="CTD" id="25939"/>
<dbReference type="DisGeNET" id="25939"/>
<dbReference type="GeneCards" id="SAMHD1"/>
<dbReference type="GeneReviews" id="SAMHD1"/>
<dbReference type="HGNC" id="HGNC:15925">
    <property type="gene designation" value="SAMHD1"/>
</dbReference>
<dbReference type="HPA" id="ENSG00000101347">
    <property type="expression patterns" value="Low tissue specificity"/>
</dbReference>
<dbReference type="MalaCards" id="SAMHD1"/>
<dbReference type="MIM" id="606754">
    <property type="type" value="gene"/>
</dbReference>
<dbReference type="MIM" id="612952">
    <property type="type" value="phenotype"/>
</dbReference>
<dbReference type="MIM" id="614415">
    <property type="type" value="phenotype"/>
</dbReference>
<dbReference type="neXtProt" id="NX_Q9Y3Z3"/>
<dbReference type="OpenTargets" id="ENSG00000101347"/>
<dbReference type="Orphanet" id="51">
    <property type="disease" value="Aicardi-Goutieres syndrome"/>
</dbReference>
<dbReference type="Orphanet" id="481662">
    <property type="disease" value="Familial Chilblain lupus"/>
</dbReference>
<dbReference type="PharmGKB" id="PA34938"/>
<dbReference type="VEuPathDB" id="HostDB:ENSG00000101347"/>
<dbReference type="eggNOG" id="KOG2681">
    <property type="taxonomic scope" value="Eukaryota"/>
</dbReference>
<dbReference type="GeneTree" id="ENSGT00390000013867"/>
<dbReference type="HOGENOM" id="CLU_026821_1_2_1"/>
<dbReference type="InParanoid" id="Q9Y3Z3"/>
<dbReference type="OMA" id="QVHGYIK"/>
<dbReference type="OrthoDB" id="9991235at2759"/>
<dbReference type="PAN-GO" id="Q9Y3Z3">
    <property type="GO annotations" value="5 GO annotations based on evolutionary models"/>
</dbReference>
<dbReference type="PhylomeDB" id="Q9Y3Z3"/>
<dbReference type="TreeFam" id="TF316113"/>
<dbReference type="BRENDA" id="3.1.5.B1">
    <property type="organism ID" value="2681"/>
</dbReference>
<dbReference type="PathwayCommons" id="Q9Y3Z3"/>
<dbReference type="Reactome" id="R-HSA-8956319">
    <property type="pathway name" value="Nucleotide catabolism"/>
</dbReference>
<dbReference type="Reactome" id="R-HSA-909733">
    <property type="pathway name" value="Interferon alpha/beta signaling"/>
</dbReference>
<dbReference type="SignaLink" id="Q9Y3Z3"/>
<dbReference type="SIGNOR" id="Q9Y3Z3"/>
<dbReference type="BioGRID-ORCS" id="25939">
    <property type="hits" value="31 hits in 1168 CRISPR screens"/>
</dbReference>
<dbReference type="ChiTaRS" id="SAMHD1">
    <property type="organism name" value="human"/>
</dbReference>
<dbReference type="EvolutionaryTrace" id="Q9Y3Z3"/>
<dbReference type="GeneWiki" id="SAMHD1"/>
<dbReference type="GenomeRNAi" id="25939"/>
<dbReference type="Pharos" id="Q9Y3Z3">
    <property type="development level" value="Tbio"/>
</dbReference>
<dbReference type="PRO" id="PR:Q9Y3Z3"/>
<dbReference type="Proteomes" id="UP000005640">
    <property type="component" value="Chromosome 20"/>
</dbReference>
<dbReference type="RNAct" id="Q9Y3Z3">
    <property type="molecule type" value="protein"/>
</dbReference>
<dbReference type="Bgee" id="ENSG00000101347">
    <property type="expression patterns" value="Expressed in monocyte and 207 other cell types or tissues"/>
</dbReference>
<dbReference type="ExpressionAtlas" id="Q9Y3Z3">
    <property type="expression patterns" value="baseline and differential"/>
</dbReference>
<dbReference type="GO" id="GO:0005654">
    <property type="term" value="C:nucleoplasm"/>
    <property type="evidence" value="ECO:0000314"/>
    <property type="project" value="HPA"/>
</dbReference>
<dbReference type="GO" id="GO:0005634">
    <property type="term" value="C:nucleus"/>
    <property type="evidence" value="ECO:0000314"/>
    <property type="project" value="UniProtKB"/>
</dbReference>
<dbReference type="GO" id="GO:0005886">
    <property type="term" value="C:plasma membrane"/>
    <property type="evidence" value="ECO:0000314"/>
    <property type="project" value="HPA"/>
</dbReference>
<dbReference type="GO" id="GO:0035861">
    <property type="term" value="C:site of double-strand break"/>
    <property type="evidence" value="ECO:0000314"/>
    <property type="project" value="UniProtKB"/>
</dbReference>
<dbReference type="GO" id="GO:0097197">
    <property type="term" value="C:tetraspanin-enriched microdomain"/>
    <property type="evidence" value="ECO:0000314"/>
    <property type="project" value="UniProtKB"/>
</dbReference>
<dbReference type="GO" id="GO:0106375">
    <property type="term" value="F:deoxynucleoside triphosphate hydrolase activity"/>
    <property type="evidence" value="ECO:0000314"/>
    <property type="project" value="UniProtKB"/>
</dbReference>
<dbReference type="GO" id="GO:0032567">
    <property type="term" value="F:dGTP binding"/>
    <property type="evidence" value="ECO:0000314"/>
    <property type="project" value="UniProtKB"/>
</dbReference>
<dbReference type="GO" id="GO:0008832">
    <property type="term" value="F:dGTPase activity"/>
    <property type="evidence" value="ECO:0000314"/>
    <property type="project" value="UniProtKB"/>
</dbReference>
<dbReference type="GO" id="GO:0005525">
    <property type="term" value="F:GTP binding"/>
    <property type="evidence" value="ECO:0007669"/>
    <property type="project" value="UniProtKB-KW"/>
</dbReference>
<dbReference type="GO" id="GO:0042802">
    <property type="term" value="F:identical protein binding"/>
    <property type="evidence" value="ECO:0000353"/>
    <property type="project" value="IntAct"/>
</dbReference>
<dbReference type="GO" id="GO:0003676">
    <property type="term" value="F:nucleic acid binding"/>
    <property type="evidence" value="ECO:0000314"/>
    <property type="project" value="UniProtKB"/>
</dbReference>
<dbReference type="GO" id="GO:0003723">
    <property type="term" value="F:RNA binding"/>
    <property type="evidence" value="ECO:0000314"/>
    <property type="project" value="UniProtKB"/>
</dbReference>
<dbReference type="GO" id="GO:0004540">
    <property type="term" value="F:RNA nuclease activity"/>
    <property type="evidence" value="ECO:0000314"/>
    <property type="project" value="UniProtKB"/>
</dbReference>
<dbReference type="GO" id="GO:0003697">
    <property type="term" value="F:single-stranded DNA binding"/>
    <property type="evidence" value="ECO:0000314"/>
    <property type="project" value="UniProtKB"/>
</dbReference>
<dbReference type="GO" id="GO:0008270">
    <property type="term" value="F:zinc ion binding"/>
    <property type="evidence" value="ECO:0000314"/>
    <property type="project" value="UniProtKB"/>
</dbReference>
<dbReference type="GO" id="GO:0046061">
    <property type="term" value="P:dATP catabolic process"/>
    <property type="evidence" value="ECO:0000314"/>
    <property type="project" value="UniProtKB"/>
</dbReference>
<dbReference type="GO" id="GO:0051607">
    <property type="term" value="P:defense response to virus"/>
    <property type="evidence" value="ECO:0000314"/>
    <property type="project" value="UniProtKB"/>
</dbReference>
<dbReference type="GO" id="GO:0009264">
    <property type="term" value="P:deoxyribonucleotide catabolic process"/>
    <property type="evidence" value="ECO:0000314"/>
    <property type="project" value="UniProtKB"/>
</dbReference>
<dbReference type="GO" id="GO:0006203">
    <property type="term" value="P:dGTP catabolic process"/>
    <property type="evidence" value="ECO:0000314"/>
    <property type="project" value="UniProtKB"/>
</dbReference>
<dbReference type="GO" id="GO:0006974">
    <property type="term" value="P:DNA damage response"/>
    <property type="evidence" value="ECO:0000314"/>
    <property type="project" value="UniProtKB"/>
</dbReference>
<dbReference type="GO" id="GO:0110025">
    <property type="term" value="P:DNA strand resection involved in replication fork processing"/>
    <property type="evidence" value="ECO:0000314"/>
    <property type="project" value="UniProtKB"/>
</dbReference>
<dbReference type="GO" id="GO:0000724">
    <property type="term" value="P:double-strand break repair via homologous recombination"/>
    <property type="evidence" value="ECO:0000314"/>
    <property type="project" value="UniProtKB"/>
</dbReference>
<dbReference type="GO" id="GO:0006955">
    <property type="term" value="P:immune response"/>
    <property type="evidence" value="ECO:0000303"/>
    <property type="project" value="UniProtKB"/>
</dbReference>
<dbReference type="GO" id="GO:0045087">
    <property type="term" value="P:innate immune response"/>
    <property type="evidence" value="ECO:0007669"/>
    <property type="project" value="UniProtKB-KW"/>
</dbReference>
<dbReference type="GO" id="GO:0060339">
    <property type="term" value="P:negative regulation of type I interferon-mediated signaling pathway"/>
    <property type="evidence" value="ECO:0000314"/>
    <property type="project" value="UniProtKB"/>
</dbReference>
<dbReference type="GO" id="GO:0051289">
    <property type="term" value="P:protein homotetramerization"/>
    <property type="evidence" value="ECO:0000314"/>
    <property type="project" value="UniProtKB"/>
</dbReference>
<dbReference type="GO" id="GO:0045088">
    <property type="term" value="P:regulation of innate immune response"/>
    <property type="evidence" value="ECO:0000314"/>
    <property type="project" value="UniProtKB"/>
</dbReference>
<dbReference type="GO" id="GO:0016446">
    <property type="term" value="P:somatic hypermutation of immunoglobulin genes"/>
    <property type="evidence" value="ECO:0000250"/>
    <property type="project" value="UniProtKB"/>
</dbReference>
<dbReference type="CDD" id="cd00077">
    <property type="entry name" value="HDc"/>
    <property type="match status" value="1"/>
</dbReference>
<dbReference type="CDD" id="cd09508">
    <property type="entry name" value="SAM_HD"/>
    <property type="match status" value="1"/>
</dbReference>
<dbReference type="FunFam" id="1.10.3210.10:FF:000015">
    <property type="entry name" value="Deoxynucleoside triphosphate triphosphohydrolase SAMHD1"/>
    <property type="match status" value="1"/>
</dbReference>
<dbReference type="FunFam" id="1.10.150.50:FF:000067">
    <property type="entry name" value="SAM and HD domain-containing deoxynucleoside triphosphate triphosphohydrolase 1"/>
    <property type="match status" value="1"/>
</dbReference>
<dbReference type="FunFam" id="3.30.70.2760:FF:000002">
    <property type="entry name" value="SAM and HD domain-containing deoxynucleoside triphosphate triphosphohydrolase 1"/>
    <property type="match status" value="1"/>
</dbReference>
<dbReference type="Gene3D" id="3.30.70.2760">
    <property type="match status" value="1"/>
</dbReference>
<dbReference type="Gene3D" id="1.10.3210.10">
    <property type="entry name" value="Hypothetical protein af1432"/>
    <property type="match status" value="1"/>
</dbReference>
<dbReference type="Gene3D" id="1.10.150.50">
    <property type="entry name" value="Transcription Factor, Ets-1"/>
    <property type="match status" value="1"/>
</dbReference>
<dbReference type="InterPro" id="IPR050135">
    <property type="entry name" value="dGTPase-like"/>
</dbReference>
<dbReference type="InterPro" id="IPR003607">
    <property type="entry name" value="HD/PDEase_dom"/>
</dbReference>
<dbReference type="InterPro" id="IPR006674">
    <property type="entry name" value="HD_domain"/>
</dbReference>
<dbReference type="InterPro" id="IPR001660">
    <property type="entry name" value="SAM"/>
</dbReference>
<dbReference type="InterPro" id="IPR013761">
    <property type="entry name" value="SAM/pointed_sf"/>
</dbReference>
<dbReference type="PANTHER" id="PTHR11373">
    <property type="entry name" value="DEOXYNUCLEOSIDE TRIPHOSPHATE TRIPHOSPHOHYDROLASE"/>
    <property type="match status" value="1"/>
</dbReference>
<dbReference type="PANTHER" id="PTHR11373:SF4">
    <property type="entry name" value="DEOXYNUCLEOSIDE TRIPHOSPHATE TRIPHOSPHOHYDROLASE SAMHD1"/>
    <property type="match status" value="1"/>
</dbReference>
<dbReference type="Pfam" id="PF01966">
    <property type="entry name" value="HD"/>
    <property type="match status" value="1"/>
</dbReference>
<dbReference type="Pfam" id="PF07647">
    <property type="entry name" value="SAM_2"/>
    <property type="match status" value="1"/>
</dbReference>
<dbReference type="SMART" id="SM00471">
    <property type="entry name" value="HDc"/>
    <property type="match status" value="1"/>
</dbReference>
<dbReference type="SMART" id="SM00454">
    <property type="entry name" value="SAM"/>
    <property type="match status" value="1"/>
</dbReference>
<dbReference type="SUPFAM" id="SSF109604">
    <property type="entry name" value="HD-domain/PDEase-like"/>
    <property type="match status" value="1"/>
</dbReference>
<dbReference type="SUPFAM" id="SSF47769">
    <property type="entry name" value="SAM/Pointed domain"/>
    <property type="match status" value="1"/>
</dbReference>
<dbReference type="PROSITE" id="PS51831">
    <property type="entry name" value="HD"/>
    <property type="match status" value="1"/>
</dbReference>
<dbReference type="PROSITE" id="PS50105">
    <property type="entry name" value="SAM_DOMAIN"/>
    <property type="match status" value="1"/>
</dbReference>
<protein>
    <recommendedName>
        <fullName evidence="48">Deoxynucleoside triphosphate triphosphohydrolase SAMHD1</fullName>
        <shortName evidence="46">dNTPase</shortName>
        <ecNumber evidence="14 15 18 24 31 32">3.1.5.-</ecNumber>
    </recommendedName>
    <alternativeName>
        <fullName evidence="43">Dendritic cell-derived IFNG-induced protein</fullName>
        <shortName evidence="43">DCIP</shortName>
    </alternativeName>
    <alternativeName>
        <fullName evidence="45">Monocyte protein 5</fullName>
        <shortName evidence="45">MOP-5</shortName>
    </alternativeName>
    <alternativeName>
        <fullName evidence="46">SAM domain and HD domain-containing protein 1</fullName>
        <shortName evidence="44">hSAMHD1</shortName>
    </alternativeName>
</protein>